<accession>P46937</accession>
<accession>B4DTY1</accession>
<accession>B7ZA01</accession>
<accession>E3WEB5</accession>
<accession>E3WEB6</accession>
<accession>E9PRV2</accession>
<accession>F5H202</accession>
<accession>K0KQ18</accession>
<accession>K0KYZ8</accession>
<accession>K0L195</accession>
<accession>K0L1G3</accession>
<accession>Q7Z574</accession>
<accession>Q8IUY9</accession>
<feature type="chain" id="PRO_0000076071" description="Transcriptional coactivator YAP1">
    <location>
        <begin position="1"/>
        <end position="504"/>
    </location>
</feature>
<feature type="domain" description="WW 1" evidence="5">
    <location>
        <begin position="171"/>
        <end position="204"/>
    </location>
</feature>
<feature type="domain" description="WW 2" evidence="5">
    <location>
        <begin position="230"/>
        <end position="263"/>
    </location>
</feature>
<feature type="region of interest" description="Disordered" evidence="6">
    <location>
        <begin position="1"/>
        <end position="59"/>
    </location>
</feature>
<feature type="region of interest" description="Disordered" evidence="6">
    <location>
        <begin position="91"/>
        <end position="114"/>
    </location>
</feature>
<feature type="region of interest" description="Disordered" evidence="6">
    <location>
        <begin position="133"/>
        <end position="158"/>
    </location>
</feature>
<feature type="region of interest" description="Disordered" evidence="6">
    <location>
        <begin position="275"/>
        <end position="309"/>
    </location>
</feature>
<feature type="region of interest" description="Transactivation domain">
    <location>
        <begin position="291"/>
        <end position="504"/>
    </location>
</feature>
<feature type="region of interest" description="Disordered" evidence="6">
    <location>
        <begin position="355"/>
        <end position="407"/>
    </location>
</feature>
<feature type="coiled-coil region" evidence="17">
    <location>
        <begin position="86"/>
        <end position="100"/>
    </location>
</feature>
<feature type="coiled-coil region" evidence="4">
    <location>
        <begin position="298"/>
        <end position="359"/>
    </location>
</feature>
<feature type="compositionally biased region" description="Pro residues" evidence="6">
    <location>
        <begin position="1"/>
        <end position="12"/>
    </location>
</feature>
<feature type="compositionally biased region" description="Pro residues" evidence="6">
    <location>
        <begin position="20"/>
        <end position="36"/>
    </location>
</feature>
<feature type="compositionally biased region" description="Low complexity" evidence="6">
    <location>
        <begin position="37"/>
        <end position="51"/>
    </location>
</feature>
<feature type="compositionally biased region" description="Polar residues" evidence="6">
    <location>
        <begin position="355"/>
        <end position="391"/>
    </location>
</feature>
<feature type="modified residue" description="Phosphoserine; by LATS1 and LATS2" evidence="12 13 49 50 51 52">
    <location>
        <position position="61"/>
    </location>
</feature>
<feature type="modified residue" description="Phosphothreonine" evidence="50">
    <location>
        <position position="63"/>
    </location>
</feature>
<feature type="modified residue" description="N6-lactoyllysine" evidence="35">
    <location>
        <position position="90"/>
    </location>
</feature>
<feature type="modified residue" description="Phosphoserine" evidence="3">
    <location>
        <position position="105"/>
    </location>
</feature>
<feature type="modified residue" description="Phosphoserine; by LATS1 and LATS2" evidence="12 13 50 52">
    <location>
        <position position="109"/>
    </location>
</feature>
<feature type="modified residue" description="Phosphothreonine" evidence="3">
    <location>
        <position position="110"/>
    </location>
</feature>
<feature type="modified residue" description="Phosphothreonine; by MAPK8 and MAPK9" evidence="21 50 52">
    <location>
        <position position="119"/>
    </location>
</feature>
<feature type="modified residue" description="Phosphoserine; by LATS1 and LATS2" evidence="12 13 16 29 33 34 49">
    <location>
        <position position="127"/>
    </location>
</feature>
<feature type="modified residue" description="Phosphoserine" evidence="53">
    <location>
        <position position="128"/>
    </location>
</feature>
<feature type="modified residue" description="Phosphoserine" evidence="49 53">
    <location>
        <position position="131"/>
    </location>
</feature>
<feature type="modified residue" description="Phosphoserine; by MAPK8 and MAPK9" evidence="21 49 50">
    <location>
        <position position="138"/>
    </location>
</feature>
<feature type="modified residue" description="Phosphothreonine; by MAPK8 and MAPK9" evidence="21 49">
    <location>
        <position position="154"/>
    </location>
</feature>
<feature type="modified residue" description="Phosphoserine; by LATS1 and LATS2" evidence="12 13">
    <location>
        <position position="164"/>
    </location>
</feature>
<feature type="modified residue" description="Phosphoserine" evidence="49 50">
    <location>
        <position position="274"/>
    </location>
</feature>
<feature type="modified residue" description="Phosphoserine" evidence="49 50 51 52">
    <location>
        <position position="289"/>
    </location>
</feature>
<feature type="modified residue" description="Phosphoserine; by MAPK8 and MAPK9" evidence="21 49 50 51">
    <location>
        <position position="367"/>
    </location>
</feature>
<feature type="modified residue" description="Phosphoserine" evidence="48">
    <location>
        <position position="371"/>
    </location>
</feature>
<feature type="modified residue" description="Phosphoserine" evidence="52">
    <location>
        <position position="381"/>
    </location>
</feature>
<feature type="modified residue" description="Phosphoserine" evidence="52">
    <location>
        <position position="382"/>
    </location>
</feature>
<feature type="modified residue" description="Phosphoserine" evidence="52">
    <location>
        <position position="388"/>
    </location>
</feature>
<feature type="modified residue" description="Phosphoserine; by LATS1 and LATS2" evidence="12 13 16 29">
    <location>
        <position position="397"/>
    </location>
</feature>
<feature type="modified residue" description="Phosphoserine; by CK1" evidence="16">
    <location>
        <position position="400"/>
    </location>
</feature>
<feature type="modified residue" description="Phosphoserine; by CK1" evidence="16">
    <location>
        <position position="403"/>
    </location>
</feature>
<feature type="modified residue" description="Phosphotyrosine; by ABL1" evidence="14">
    <location>
        <position position="407"/>
    </location>
</feature>
<feature type="modified residue" description="Phosphothreonine; by MAPK8 and MAPK9" evidence="21">
    <location>
        <position position="412"/>
    </location>
</feature>
<feature type="splice variant" id="VSP_045190" description="In isoform 4." evidence="39">
    <location>
        <begin position="1"/>
        <end position="178"/>
    </location>
</feature>
<feature type="splice variant" id="VSP_039053" description="In isoform 3, isoform 5, isoform 6 and isoform 7." evidence="40 42">
    <location>
        <begin position="230"/>
        <end position="267"/>
    </location>
</feature>
<feature type="splice variant" id="VSP_039054" description="In isoform 2 and isoform 5." evidence="38">
    <location>
        <begin position="328"/>
        <end position="343"/>
    </location>
</feature>
<feature type="splice variant" id="VSP_053483" description="In isoform 7 and isoform 9." evidence="40">
    <original>Q</original>
    <variation>QVRPQ</variation>
    <location>
        <position position="328"/>
    </location>
</feature>
<feature type="splice variant" id="VSP_039055" description="In isoform 3 and isoform 8." evidence="40">
    <original>AMRNINPSTANSPKC</original>
    <variation>VRP</variation>
    <location>
        <begin position="329"/>
        <end position="343"/>
    </location>
</feature>
<feature type="sequence variant" id="VAR_071125" description="In dbSNP:rs1162286204." evidence="25">
    <original>P</original>
    <variation>L</variation>
    <location>
        <position position="139"/>
    </location>
</feature>
<feature type="sequence variant" id="VAR_071126" description="In dbSNP:rs376161041." evidence="25">
    <original>S</original>
    <variation>L</variation>
    <location>
        <position position="227"/>
    </location>
</feature>
<feature type="sequence variant" id="VAR_071127" description="In dbSNP:rs777949318." evidence="25">
    <original>M</original>
    <variation>V</variation>
    <location>
        <position position="330"/>
    </location>
</feature>
<feature type="sequence variant" id="VAR_071128" evidence="25">
    <original>G</original>
    <variation>E</variation>
    <location>
        <position position="462"/>
    </location>
</feature>
<feature type="mutagenesis site" description="In YAP-4SA; prevents phosphorylation by LATS1 and LATS2, promoting retention in the nucleus; when associated with A-109; A-127 and A-164. Prevents phosphorylation by PRPK4; when associated with A-109, A-164, A-397." evidence="16 31">
    <original>S</original>
    <variation>A</variation>
    <location>
        <position position="61"/>
    </location>
</feature>
<feature type="mutagenesis site" description="No change in interaction with TEAD4. Reduced interaction with TEAD4 and transforming ability; when associated with A-84 and A-85." evidence="18">
    <original>V</original>
    <variation>A</variation>
    <location>
        <position position="80"/>
    </location>
</feature>
<feature type="mutagenesis site" description="Reduced interaction with TEAD4 and transforming ability; when associated with A-80 and A-85." evidence="18">
    <original>V</original>
    <variation>A</variation>
    <location>
        <position position="84"/>
    </location>
</feature>
<feature type="mutagenesis site" description="Reduced interaction with TEAD4 and transforming ability; when associated with A-80 and A-84." evidence="18">
    <original>P</original>
    <variation>A</variation>
    <location>
        <position position="85"/>
    </location>
</feature>
<feature type="mutagenesis site" description="Complete loss of interaction with TEAD1." evidence="17">
    <original>M</original>
    <variation>A</variation>
    <location>
        <position position="86"/>
    </location>
</feature>
<feature type="mutagenesis site" description="Complete loss of interaction with TEAD1." evidence="17">
    <original>R</original>
    <variation>A</variation>
    <location>
        <position position="89"/>
    </location>
</feature>
<feature type="mutagenesis site" description="Nearly abolished lactylation." evidence="35">
    <original>K</original>
    <variation>R</variation>
    <location>
        <position position="90"/>
    </location>
</feature>
<feature type="mutagenesis site" description="Complete loss of interaction with TEAD1." evidence="17">
    <original>L</original>
    <variation>A</variation>
    <location>
        <position position="91"/>
    </location>
</feature>
<feature type="mutagenesis site" description="Loss of interaction with TEAD1, TEAD2, TEAD3 and TEAD4. Loss of transcriptional coactivation activity towards TEAD1, TEAD2, TEAD3 and TEAD4 but no effect on its activity towards RUNX2 and ERBB4. Abolishes suppression of ciliogenesis." evidence="15 17">
    <original>S</original>
    <variation>A</variation>
    <location>
        <position position="94"/>
    </location>
</feature>
<feature type="mutagenesis site" description="Complete loss of interaction with TEAD1." evidence="17">
    <original>F</original>
    <variation>A</variation>
    <location>
        <position position="95"/>
    </location>
</feature>
<feature type="mutagenesis site" description="Loss of interaction with TEAD1." evidence="17">
    <original>F</original>
    <variation>A</variation>
    <location>
        <position position="96"/>
    </location>
</feature>
<feature type="mutagenesis site" description="In YAP-4SA; prevents phosphorylation by LATS1 and LATS2, promoting retention in the nucleus; when associated with A-61; A-127 and A-164. Prevents phosphorylation by PRPK4; when associated with A-61, A-164, A-397." evidence="16 31">
    <original>S</original>
    <variation>A</variation>
    <location>
        <position position="109"/>
    </location>
</feature>
<feature type="mutagenesis site" description="Loss of phosphorylation by LATS1." evidence="12 13">
    <original>H</original>
    <variation>A</variation>
    <variation>R</variation>
    <variation>N</variation>
    <variation>K</variation>
    <location>
        <position position="122"/>
    </location>
</feature>
<feature type="mutagenesis site" description="Significantly decreased phosphorylation at S-127 and decreased interaction with YWHAB." evidence="12 13">
    <original>H</original>
    <variation>L</variation>
    <variation>Y</variation>
    <location>
        <position position="122"/>
    </location>
</feature>
<feature type="mutagenesis site" description="Loss of phosphorylation by LATS1." evidence="13">
    <original>R</original>
    <variation>A</variation>
    <location>
        <position position="124"/>
    </location>
</feature>
<feature type="mutagenesis site" description="Reduced phosphorylation by LATS2, loss of phosphorylation by LATS1, loss of interaction with YWHAB, decreased interaction with ERBB4 and increased nuclear localization and transcriptional coactivation activity toward ERBB4. In YAP-4SA; prevents phosphorylation by LATS1 and LATS2, promoting retention in the nucleus; when associated with A-61; A-109; A-127 and A-164. No effect on phosphorylation by PRPK4." evidence="7 12 13 16 31">
    <original>S</original>
    <variation>A</variation>
    <location>
        <position position="127"/>
    </location>
</feature>
<feature type="mutagenesis site" description="No effect on phosphorylation but loss of interaction with YWHAB." evidence="12">
    <original>P</original>
    <variation>D</variation>
    <location>
        <position position="129"/>
    </location>
</feature>
<feature type="mutagenesis site" description="In YAP-4SA; prevents phosphorylation by LATS1 and LATS2, promoting retention in the nucleus; when associated with A-61; A-109 and A-127. Prevents phosphorylation by PRPK4; when associated with A-61, A-109, A-397." evidence="16 31">
    <original>S</original>
    <variation>A</variation>
    <location>
        <position position="164"/>
    </location>
</feature>
<feature type="mutagenesis site" description="Loss of interaction with ERBB4, loss of transcriptional coactivation function toward CTF and reduced interaction with PRRG4; when associated with A-202." evidence="7 24">
    <original>W</original>
    <variation>A</variation>
    <location>
        <position position="199"/>
    </location>
</feature>
<feature type="mutagenesis site" description="Loss of interaction with ERBB4, loss of transcriptional coactivation function toward CTF and reduced interaction with PRRG4; when associated with A-199." evidence="7 24">
    <original>P</original>
    <variation>A</variation>
    <location>
        <position position="202"/>
    </location>
</feature>
<feature type="mutagenesis site" description="No effect on interaction with PRRG4." evidence="24">
    <original>S</original>
    <variation>A</variation>
    <location>
        <position position="217"/>
    </location>
</feature>
<feature type="mutagenesis site" description="Reduced interaction with PRRG4; when associated with A-261." evidence="24">
    <original>W</original>
    <variation>A</variation>
    <location>
        <position position="258"/>
    </location>
</feature>
<feature type="mutagenesis site" description="Reduced interaction with PRRG4; when associated with A-258." evidence="24">
    <original>P</original>
    <variation>A</variation>
    <location>
        <position position="261"/>
    </location>
</feature>
<feature type="mutagenesis site" description="Loss of phosphorylation by LATS1. Loss of phosphorylation by PRPK4; when associated with A-61, A-109, A-164." evidence="13 31">
    <original>S</original>
    <variation>A</variation>
    <location>
        <position position="397"/>
    </location>
</feature>
<feature type="mutagenesis site" description="Enhanced interaction with TP73." evidence="14">
    <original>Y</original>
    <variation>E</variation>
    <location>
        <position position="407"/>
    </location>
</feature>
<feature type="mutagenesis site" description="No phosphorylation by ABL1 and partial loss of binding to TP73." evidence="14">
    <original>Y</original>
    <variation>F</variation>
    <location>
        <position position="407"/>
    </location>
</feature>
<feature type="strand" evidence="59">
    <location>
        <begin position="52"/>
        <end position="54"/>
    </location>
</feature>
<feature type="helix" evidence="59">
    <location>
        <begin position="61"/>
        <end position="73"/>
    </location>
</feature>
<feature type="helix" evidence="58">
    <location>
        <begin position="75"/>
        <end position="77"/>
    </location>
</feature>
<feature type="helix" evidence="59">
    <location>
        <begin position="86"/>
        <end position="88"/>
    </location>
</feature>
<feature type="helix" evidence="59">
    <location>
        <begin position="93"/>
        <end position="96"/>
    </location>
</feature>
<feature type="strand" evidence="54">
    <location>
        <begin position="169"/>
        <end position="171"/>
    </location>
</feature>
<feature type="strand" evidence="56">
    <location>
        <begin position="177"/>
        <end position="181"/>
    </location>
</feature>
<feature type="strand" evidence="54">
    <location>
        <begin position="183"/>
        <end position="185"/>
    </location>
</feature>
<feature type="strand" evidence="56">
    <location>
        <begin position="187"/>
        <end position="191"/>
    </location>
</feature>
<feature type="turn" evidence="56">
    <location>
        <begin position="192"/>
        <end position="195"/>
    </location>
</feature>
<feature type="strand" evidence="56">
    <location>
        <begin position="196"/>
        <end position="200"/>
    </location>
</feature>
<feature type="helix" evidence="56">
    <location>
        <begin position="202"/>
        <end position="206"/>
    </location>
</feature>
<feature type="strand" evidence="55">
    <location>
        <begin position="233"/>
        <end position="235"/>
    </location>
</feature>
<feature type="strand" evidence="55">
    <location>
        <begin position="238"/>
        <end position="241"/>
    </location>
</feature>
<feature type="turn" evidence="55">
    <location>
        <begin position="242"/>
        <end position="244"/>
    </location>
</feature>
<feature type="strand" evidence="55">
    <location>
        <begin position="245"/>
        <end position="250"/>
    </location>
</feature>
<feature type="turn" evidence="55">
    <location>
        <begin position="251"/>
        <end position="254"/>
    </location>
</feature>
<feature type="strand" evidence="55">
    <location>
        <begin position="255"/>
        <end position="259"/>
    </location>
</feature>
<feature type="strand" evidence="57">
    <location>
        <begin position="261"/>
        <end position="263"/>
    </location>
</feature>
<keyword id="KW-0002">3D-structure</keyword>
<keyword id="KW-0010">Activator</keyword>
<keyword id="KW-0025">Alternative splicing</keyword>
<keyword id="KW-0965">Cell junction</keyword>
<keyword id="KW-1003">Cell membrane</keyword>
<keyword id="KW-0175">Coiled coil</keyword>
<keyword id="KW-0963">Cytoplasm</keyword>
<keyword id="KW-0472">Membrane</keyword>
<keyword id="KW-0539">Nucleus</keyword>
<keyword id="KW-0597">Phosphoprotein</keyword>
<keyword id="KW-1267">Proteomics identification</keyword>
<keyword id="KW-0656">Proto-oncogene</keyword>
<keyword id="KW-1185">Reference proteome</keyword>
<keyword id="KW-0677">Repeat</keyword>
<keyword id="KW-0678">Repressor</keyword>
<keyword id="KW-0796">Tight junction</keyword>
<keyword id="KW-0804">Transcription</keyword>
<keyword id="KW-0805">Transcription regulation</keyword>
<keyword id="KW-0832">Ubl conjugation</keyword>
<name>YAP1_HUMAN</name>
<dbReference type="EMBL" id="X80507">
    <property type="protein sequence ID" value="CAA56672.1"/>
    <property type="molecule type" value="Genomic_DNA"/>
</dbReference>
<dbReference type="EMBL" id="AY316529">
    <property type="protein sequence ID" value="AAP92710.1"/>
    <property type="molecule type" value="mRNA"/>
</dbReference>
<dbReference type="EMBL" id="AB567720">
    <property type="protein sequence ID" value="BAJ41471.1"/>
    <property type="molecule type" value="mRNA"/>
</dbReference>
<dbReference type="EMBL" id="AB567721">
    <property type="protein sequence ID" value="BAJ41472.1"/>
    <property type="molecule type" value="mRNA"/>
</dbReference>
<dbReference type="EMBL" id="AK300414">
    <property type="protein sequence ID" value="BAG62143.1"/>
    <property type="molecule type" value="mRNA"/>
</dbReference>
<dbReference type="EMBL" id="AK316116">
    <property type="protein sequence ID" value="BAH14487.1"/>
    <property type="molecule type" value="mRNA"/>
</dbReference>
<dbReference type="EMBL" id="AP000942">
    <property type="status" value="NOT_ANNOTATED_CDS"/>
    <property type="molecule type" value="Genomic_DNA"/>
</dbReference>
<dbReference type="EMBL" id="AP001527">
    <property type="status" value="NOT_ANNOTATED_CDS"/>
    <property type="molecule type" value="Genomic_DNA"/>
</dbReference>
<dbReference type="EMBL" id="AP002777">
    <property type="status" value="NOT_ANNOTATED_CDS"/>
    <property type="molecule type" value="Genomic_DNA"/>
</dbReference>
<dbReference type="EMBL" id="CH471065">
    <property type="protein sequence ID" value="EAW67011.1"/>
    <property type="molecule type" value="Genomic_DNA"/>
</dbReference>
<dbReference type="EMBL" id="CH471065">
    <property type="protein sequence ID" value="EAW67015.1"/>
    <property type="molecule type" value="Genomic_DNA"/>
</dbReference>
<dbReference type="EMBL" id="BC038235">
    <property type="protein sequence ID" value="AAH38235.1"/>
    <property type="molecule type" value="mRNA"/>
</dbReference>
<dbReference type="EMBL" id="HE864159">
    <property type="protein sequence ID" value="CCI79618.1"/>
    <property type="molecule type" value="mRNA"/>
</dbReference>
<dbReference type="EMBL" id="HE864160">
    <property type="protein sequence ID" value="CCI79619.1"/>
    <property type="molecule type" value="mRNA"/>
</dbReference>
<dbReference type="EMBL" id="HE864161">
    <property type="protein sequence ID" value="CCI79620.1"/>
    <property type="molecule type" value="mRNA"/>
</dbReference>
<dbReference type="EMBL" id="HE864162">
    <property type="protein sequence ID" value="CCI79621.1"/>
    <property type="molecule type" value="mRNA"/>
</dbReference>
<dbReference type="CCDS" id="CCDS44716.1">
    <molecule id="P46937-1"/>
</dbReference>
<dbReference type="CCDS" id="CCDS53699.1">
    <molecule id="P46937-2"/>
</dbReference>
<dbReference type="CCDS" id="CCDS53700.1">
    <molecule id="P46937-4"/>
</dbReference>
<dbReference type="CCDS" id="CCDS60944.1">
    <molecule id="P46937-8"/>
</dbReference>
<dbReference type="CCDS" id="CCDS60945.1">
    <molecule id="P46937-3"/>
</dbReference>
<dbReference type="CCDS" id="CCDS73373.1">
    <molecule id="P46937-9"/>
</dbReference>
<dbReference type="CCDS" id="CCDS73374.1">
    <molecule id="P46937-7"/>
</dbReference>
<dbReference type="CCDS" id="CCDS8314.2">
    <molecule id="P46937-5"/>
</dbReference>
<dbReference type="PIR" id="A56954">
    <property type="entry name" value="A56954"/>
</dbReference>
<dbReference type="RefSeq" id="NP_001123617.1">
    <molecule id="P46937-1"/>
    <property type="nucleotide sequence ID" value="NM_001130145.3"/>
</dbReference>
<dbReference type="RefSeq" id="NP_001181973.1">
    <molecule id="P46937-2"/>
    <property type="nucleotide sequence ID" value="NM_001195044.2"/>
</dbReference>
<dbReference type="RefSeq" id="NP_001181974.1">
    <molecule id="P46937-4"/>
    <property type="nucleotide sequence ID" value="NM_001195045.2"/>
</dbReference>
<dbReference type="RefSeq" id="NP_001269026.1">
    <molecule id="P46937-6"/>
    <property type="nucleotide sequence ID" value="NM_001282097.2"/>
</dbReference>
<dbReference type="RefSeq" id="NP_001269027.1">
    <molecule id="P46937-3"/>
    <property type="nucleotide sequence ID" value="NM_001282098.2"/>
</dbReference>
<dbReference type="RefSeq" id="NP_001269028.1">
    <molecule id="P46937-7"/>
    <property type="nucleotide sequence ID" value="NM_001282099.2"/>
</dbReference>
<dbReference type="RefSeq" id="NP_001269029.1">
    <molecule id="P46937-8"/>
    <property type="nucleotide sequence ID" value="NM_001282100.2"/>
</dbReference>
<dbReference type="RefSeq" id="NP_001269030.1">
    <molecule id="P46937-9"/>
    <property type="nucleotide sequence ID" value="NM_001282101.2"/>
</dbReference>
<dbReference type="RefSeq" id="NP_006097.2">
    <molecule id="P46937-5"/>
    <property type="nucleotide sequence ID" value="NM_006106.5"/>
</dbReference>
<dbReference type="PDB" id="1JMQ">
    <property type="method" value="NMR"/>
    <property type="chains" value="A=165-210"/>
</dbReference>
<dbReference type="PDB" id="1K5R">
    <property type="method" value="NMR"/>
    <property type="chains" value="A=165-204"/>
</dbReference>
<dbReference type="PDB" id="1K9Q">
    <property type="method" value="NMR"/>
    <property type="chains" value="A=165-204"/>
</dbReference>
<dbReference type="PDB" id="1K9R">
    <property type="method" value="NMR"/>
    <property type="chains" value="A=165-204"/>
</dbReference>
<dbReference type="PDB" id="2LAW">
    <property type="method" value="NMR"/>
    <property type="chains" value="A=230-263"/>
</dbReference>
<dbReference type="PDB" id="2LAX">
    <property type="method" value="NMR"/>
    <property type="chains" value="A=170-205"/>
</dbReference>
<dbReference type="PDB" id="2LAY">
    <property type="method" value="NMR"/>
    <property type="chains" value="A=170-205"/>
</dbReference>
<dbReference type="PDB" id="2LTV">
    <property type="method" value="NMR"/>
    <property type="chains" value="A=230-265"/>
</dbReference>
<dbReference type="PDB" id="2LTW">
    <property type="method" value="NMR"/>
    <property type="chains" value="A=170-205"/>
</dbReference>
<dbReference type="PDB" id="3KYS">
    <property type="method" value="X-ray"/>
    <property type="resolution" value="2.80 A"/>
    <property type="chains" value="B/D=50-171"/>
</dbReference>
<dbReference type="PDB" id="3MHR">
    <property type="method" value="X-ray"/>
    <property type="resolution" value="1.15 A"/>
    <property type="chains" value="P=124-133"/>
</dbReference>
<dbReference type="PDB" id="4RE1">
    <property type="method" value="X-ray"/>
    <property type="resolution" value="2.20 A"/>
    <property type="chains" value="C/D=50-171"/>
</dbReference>
<dbReference type="PDB" id="4REX">
    <property type="method" value="X-ray"/>
    <property type="resolution" value="1.60 A"/>
    <property type="chains" value="A=165-209"/>
</dbReference>
<dbReference type="PDB" id="5OAQ">
    <property type="method" value="X-ray"/>
    <property type="resolution" value="1.95 A"/>
    <property type="chains" value="L=60-100"/>
</dbReference>
<dbReference type="PDB" id="5YDX">
    <property type="method" value="NMR"/>
    <property type="chains" value="A=164-218"/>
</dbReference>
<dbReference type="PDB" id="5YDY">
    <property type="method" value="NMR"/>
    <property type="chains" value="A=229-287"/>
</dbReference>
<dbReference type="PDB" id="6G6X">
    <property type="method" value="X-ray"/>
    <property type="resolution" value="1.13 A"/>
    <property type="chains" value="P=124-133"/>
</dbReference>
<dbReference type="PDB" id="6G8I">
    <property type="method" value="X-ray"/>
    <property type="resolution" value="1.60 A"/>
    <property type="chains" value="P=125-133"/>
</dbReference>
<dbReference type="PDB" id="6G8J">
    <property type="method" value="X-ray"/>
    <property type="resolution" value="1.47 A"/>
    <property type="chains" value="P=124-133"/>
</dbReference>
<dbReference type="PDB" id="6G8K">
    <property type="method" value="X-ray"/>
    <property type="resolution" value="1.25 A"/>
    <property type="chains" value="P=124-133"/>
</dbReference>
<dbReference type="PDB" id="6G8L">
    <property type="method" value="X-ray"/>
    <property type="resolution" value="1.37 A"/>
    <property type="chains" value="P=124-133"/>
</dbReference>
<dbReference type="PDB" id="6G8P">
    <property type="method" value="X-ray"/>
    <property type="resolution" value="1.90 A"/>
    <property type="chains" value="P=124-133"/>
</dbReference>
<dbReference type="PDB" id="6G8Q">
    <property type="method" value="X-ray"/>
    <property type="resolution" value="1.85 A"/>
    <property type="chains" value="P=124-132"/>
</dbReference>
<dbReference type="PDB" id="6GE3">
    <property type="method" value="X-ray"/>
    <property type="resolution" value="1.85 A"/>
    <property type="chains" value="L=60-100"/>
</dbReference>
<dbReference type="PDB" id="6GE4">
    <property type="method" value="X-ray"/>
    <property type="resolution" value="1.97 A"/>
    <property type="chains" value="L=60-100"/>
</dbReference>
<dbReference type="PDB" id="6GE5">
    <property type="method" value="X-ray"/>
    <property type="resolution" value="2.05 A"/>
    <property type="chains" value="L=60-100"/>
</dbReference>
<dbReference type="PDB" id="6GE6">
    <property type="method" value="X-ray"/>
    <property type="resolution" value="1.80 A"/>
    <property type="chains" value="L=60-100"/>
</dbReference>
<dbReference type="PDB" id="6GEC">
    <property type="method" value="X-ray"/>
    <property type="resolution" value="1.70 A"/>
    <property type="chains" value="L=60-99"/>
</dbReference>
<dbReference type="PDB" id="6GEE">
    <property type="method" value="X-ray"/>
    <property type="resolution" value="1.96 A"/>
    <property type="chains" value="L=60-99"/>
</dbReference>
<dbReference type="PDB" id="6GEG">
    <property type="method" value="X-ray"/>
    <property type="resolution" value="2.23 A"/>
    <property type="chains" value="L=60-99"/>
</dbReference>
<dbReference type="PDB" id="6GEI">
    <property type="method" value="X-ray"/>
    <property type="resolution" value="1.65 A"/>
    <property type="chains" value="L=60-100"/>
</dbReference>
<dbReference type="PDB" id="6GEK">
    <property type="method" value="X-ray"/>
    <property type="resolution" value="2.28 A"/>
    <property type="chains" value="L/M=60-100"/>
</dbReference>
<dbReference type="PDB" id="6HIK">
    <property type="method" value="X-ray"/>
    <property type="resolution" value="1.65 A"/>
    <property type="chains" value="L=60-99"/>
</dbReference>
<dbReference type="PDB" id="6HIL">
    <property type="method" value="X-ray"/>
    <property type="resolution" value="2.30 A"/>
    <property type="chains" value="L/M/N/O=60-100"/>
</dbReference>
<dbReference type="PDB" id="6Q2X">
    <property type="method" value="X-ray"/>
    <property type="resolution" value="2.10 A"/>
    <property type="chains" value="L=60-100"/>
</dbReference>
<dbReference type="PDB" id="7O07">
    <property type="method" value="X-ray"/>
    <property type="resolution" value="1.20 A"/>
    <property type="chains" value="P=124-133"/>
</dbReference>
<dbReference type="PDB" id="8A8Q">
    <property type="method" value="X-ray"/>
    <property type="resolution" value="1.47 A"/>
    <property type="chains" value="C/D=51-99"/>
</dbReference>
<dbReference type="PDB" id="8A8R">
    <property type="method" value="X-ray"/>
    <property type="resolution" value="1.70 A"/>
    <property type="chains" value="L/M=50-100"/>
</dbReference>
<dbReference type="PDB" id="8C2F">
    <property type="method" value="X-ray"/>
    <property type="resolution" value="2.30 A"/>
    <property type="chains" value="P=124-133"/>
</dbReference>
<dbReference type="PDB" id="8WRG">
    <property type="method" value="NMR"/>
    <property type="chains" value="A=450-504"/>
</dbReference>
<dbReference type="PDB" id="9FZA">
    <property type="method" value="X-ray"/>
    <property type="resolution" value="2.21 A"/>
    <property type="chains" value="B/D=51-110"/>
</dbReference>
<dbReference type="PDBsum" id="1JMQ"/>
<dbReference type="PDBsum" id="1K5R"/>
<dbReference type="PDBsum" id="1K9Q"/>
<dbReference type="PDBsum" id="1K9R"/>
<dbReference type="PDBsum" id="2LAW"/>
<dbReference type="PDBsum" id="2LAX"/>
<dbReference type="PDBsum" id="2LAY"/>
<dbReference type="PDBsum" id="2LTV"/>
<dbReference type="PDBsum" id="2LTW"/>
<dbReference type="PDBsum" id="3KYS"/>
<dbReference type="PDBsum" id="3MHR"/>
<dbReference type="PDBsum" id="4RE1"/>
<dbReference type="PDBsum" id="4REX"/>
<dbReference type="PDBsum" id="5OAQ"/>
<dbReference type="PDBsum" id="5YDX"/>
<dbReference type="PDBsum" id="5YDY"/>
<dbReference type="PDBsum" id="6G6X"/>
<dbReference type="PDBsum" id="6G8I"/>
<dbReference type="PDBsum" id="6G8J"/>
<dbReference type="PDBsum" id="6G8K"/>
<dbReference type="PDBsum" id="6G8L"/>
<dbReference type="PDBsum" id="6G8P"/>
<dbReference type="PDBsum" id="6G8Q"/>
<dbReference type="PDBsum" id="6GE3"/>
<dbReference type="PDBsum" id="6GE4"/>
<dbReference type="PDBsum" id="6GE5"/>
<dbReference type="PDBsum" id="6GE6"/>
<dbReference type="PDBsum" id="6GEC"/>
<dbReference type="PDBsum" id="6GEE"/>
<dbReference type="PDBsum" id="6GEG"/>
<dbReference type="PDBsum" id="6GEI"/>
<dbReference type="PDBsum" id="6GEK"/>
<dbReference type="PDBsum" id="6HIK"/>
<dbReference type="PDBsum" id="6HIL"/>
<dbReference type="PDBsum" id="6Q2X"/>
<dbReference type="PDBsum" id="7O07"/>
<dbReference type="PDBsum" id="8A8Q"/>
<dbReference type="PDBsum" id="8A8R"/>
<dbReference type="PDBsum" id="8C2F"/>
<dbReference type="PDBsum" id="8WRG"/>
<dbReference type="PDBsum" id="9FZA"/>
<dbReference type="SMR" id="P46937"/>
<dbReference type="BioGRID" id="115684">
    <property type="interactions" value="1106"/>
</dbReference>
<dbReference type="ComplexPortal" id="CPX-256">
    <property type="entry name" value="YAP1-TEAD1 transcription factor complex"/>
</dbReference>
<dbReference type="CORUM" id="P46937"/>
<dbReference type="DIP" id="DIP-40839N"/>
<dbReference type="ELM" id="P46937"/>
<dbReference type="FunCoup" id="P46937">
    <property type="interactions" value="2282"/>
</dbReference>
<dbReference type="IntAct" id="P46937">
    <property type="interactions" value="212"/>
</dbReference>
<dbReference type="MINT" id="P46937"/>
<dbReference type="STRING" id="9606.ENSP00000478927"/>
<dbReference type="BindingDB" id="P46937"/>
<dbReference type="ChEMBL" id="CHEMBL3334415"/>
<dbReference type="MoonProt" id="P46937"/>
<dbReference type="GlyCosmos" id="P46937">
    <property type="glycosylation" value="1 site, 1 glycan"/>
</dbReference>
<dbReference type="GlyGen" id="P46937">
    <property type="glycosylation" value="12 sites, 1 N-linked glycan (1 site), 1 O-linked glycan (9 sites)"/>
</dbReference>
<dbReference type="iPTMnet" id="P46937"/>
<dbReference type="MetOSite" id="P46937"/>
<dbReference type="PhosphoSitePlus" id="P46937"/>
<dbReference type="BioMuta" id="YAP1"/>
<dbReference type="DMDM" id="294862479"/>
<dbReference type="jPOST" id="P46937"/>
<dbReference type="MassIVE" id="P46937"/>
<dbReference type="PaxDb" id="9606-ENSP00000478927"/>
<dbReference type="PeptideAtlas" id="P46937"/>
<dbReference type="ProteomicsDB" id="23425"/>
<dbReference type="ProteomicsDB" id="25812"/>
<dbReference type="ProteomicsDB" id="5134"/>
<dbReference type="ProteomicsDB" id="55772">
    <molecule id="P46937-1"/>
</dbReference>
<dbReference type="ProteomicsDB" id="55773">
    <molecule id="P46937-2"/>
</dbReference>
<dbReference type="ProteomicsDB" id="55774">
    <molecule id="P46937-3"/>
</dbReference>
<dbReference type="Pumba" id="P46937"/>
<dbReference type="Antibodypedia" id="3994">
    <property type="antibodies" value="997 antibodies from 44 providers"/>
</dbReference>
<dbReference type="DNASU" id="10413"/>
<dbReference type="Ensembl" id="ENST00000282441.10">
    <molecule id="P46937-1"/>
    <property type="protein sequence ID" value="ENSP00000282441.5"/>
    <property type="gene ID" value="ENSG00000137693.14"/>
</dbReference>
<dbReference type="Ensembl" id="ENST00000345877.6">
    <molecule id="P46937-7"/>
    <property type="protein sequence ID" value="ENSP00000331023.4"/>
    <property type="gene ID" value="ENSG00000137693.14"/>
</dbReference>
<dbReference type="Ensembl" id="ENST00000524575.5">
    <molecule id="P46937-4"/>
    <property type="protein sequence ID" value="ENSP00000435602.1"/>
    <property type="gene ID" value="ENSG00000137693.14"/>
</dbReference>
<dbReference type="Ensembl" id="ENST00000526343.5">
    <molecule id="P46937-5"/>
    <property type="protein sequence ID" value="ENSP00000434134.1"/>
    <property type="gene ID" value="ENSG00000137693.14"/>
</dbReference>
<dbReference type="Ensembl" id="ENST00000531439.5">
    <molecule id="P46937-2"/>
    <property type="protein sequence ID" value="ENSP00000431574.1"/>
    <property type="gene ID" value="ENSG00000137693.14"/>
</dbReference>
<dbReference type="Ensembl" id="ENST00000537274.5">
    <molecule id="P46937-8"/>
    <property type="protein sequence ID" value="ENSP00000445635.1"/>
    <property type="gene ID" value="ENSG00000137693.14"/>
</dbReference>
<dbReference type="Ensembl" id="ENST00000615667.4">
    <molecule id="P46937-9"/>
    <property type="protein sequence ID" value="ENSP00000478927.1"/>
    <property type="gene ID" value="ENSG00000137693.14"/>
</dbReference>
<dbReference type="Ensembl" id="ENST00000629586.2">
    <molecule id="P46937-3"/>
    <property type="protein sequence ID" value="ENSP00000487519.1"/>
    <property type="gene ID" value="ENSG00000137693.14"/>
</dbReference>
<dbReference type="GeneID" id="10413"/>
<dbReference type="KEGG" id="hsa:10413"/>
<dbReference type="MANE-Select" id="ENST00000282441.10">
    <property type="protein sequence ID" value="ENSP00000282441.5"/>
    <property type="RefSeq nucleotide sequence ID" value="NM_001130145.3"/>
    <property type="RefSeq protein sequence ID" value="NP_001123617.1"/>
</dbReference>
<dbReference type="UCSC" id="uc001pgt.3">
    <molecule id="P46937-1"/>
    <property type="organism name" value="human"/>
</dbReference>
<dbReference type="AGR" id="HGNC:16262"/>
<dbReference type="CTD" id="10413"/>
<dbReference type="DisGeNET" id="10413"/>
<dbReference type="GeneCards" id="YAP1"/>
<dbReference type="HGNC" id="HGNC:16262">
    <property type="gene designation" value="YAP1"/>
</dbReference>
<dbReference type="HPA" id="ENSG00000137693">
    <property type="expression patterns" value="Low tissue specificity"/>
</dbReference>
<dbReference type="MalaCards" id="YAP1"/>
<dbReference type="MIM" id="120433">
    <property type="type" value="phenotype"/>
</dbReference>
<dbReference type="MIM" id="606608">
    <property type="type" value="gene"/>
</dbReference>
<dbReference type="neXtProt" id="NX_P46937"/>
<dbReference type="OpenTargets" id="ENSG00000137693"/>
<dbReference type="Orphanet" id="157791">
    <property type="disease" value="Epithelioid hemangioendothelioma"/>
</dbReference>
<dbReference type="Orphanet" id="1473">
    <property type="disease" value="Uveal coloboma-cleft lip and palate-intellectual disability"/>
</dbReference>
<dbReference type="PharmGKB" id="PA38103"/>
<dbReference type="VEuPathDB" id="HostDB:ENSG00000137693"/>
<dbReference type="eggNOG" id="KOG0940">
    <property type="taxonomic scope" value="Eukaryota"/>
</dbReference>
<dbReference type="GeneTree" id="ENSGT00510000046760"/>
<dbReference type="HOGENOM" id="CLU_041917_0_1_1"/>
<dbReference type="InParanoid" id="P46937"/>
<dbReference type="OMA" id="IIHPRAN"/>
<dbReference type="OrthoDB" id="3045089at2759"/>
<dbReference type="PAN-GO" id="P46937">
    <property type="GO annotations" value="6 GO annotations based on evolutionary models"/>
</dbReference>
<dbReference type="PhylomeDB" id="P46937"/>
<dbReference type="TreeFam" id="TF326941"/>
<dbReference type="PathwayCommons" id="P46937"/>
<dbReference type="Reactome" id="R-HSA-1251985">
    <property type="pathway name" value="Nuclear signaling by ERBB4"/>
</dbReference>
<dbReference type="Reactome" id="R-HSA-2028269">
    <property type="pathway name" value="Signaling by Hippo"/>
</dbReference>
<dbReference type="Reactome" id="R-HSA-2032785">
    <property type="pathway name" value="YAP1- and WWTR1 (TAZ)-stimulated gene expression"/>
</dbReference>
<dbReference type="Reactome" id="R-HSA-8939236">
    <property type="pathway name" value="RUNX1 regulates transcription of genes involved in differentiation of HSCs"/>
</dbReference>
<dbReference type="Reactome" id="R-HSA-8940973">
    <property type="pathway name" value="RUNX2 regulates osteoblast differentiation"/>
</dbReference>
<dbReference type="Reactome" id="R-HSA-8951671">
    <property type="pathway name" value="RUNX3 regulates YAP1-mediated transcription"/>
</dbReference>
<dbReference type="Reactome" id="R-HSA-9619665">
    <property type="pathway name" value="EGR2 and SOX10-mediated initiation of Schwann cell myelination"/>
</dbReference>
<dbReference type="Reactome" id="R-HSA-9725554">
    <property type="pathway name" value="Differentiation of Keratinocytes in Interfollicular Epidermis in Mammalian Skin"/>
</dbReference>
<dbReference type="Reactome" id="R-HSA-9796292">
    <property type="pathway name" value="Formation of axial mesoderm"/>
</dbReference>
<dbReference type="Reactome" id="R-HSA-9819196">
    <property type="pathway name" value="Zygotic genome activation (ZGA)"/>
</dbReference>
<dbReference type="Reactome" id="R-HSA-9860927">
    <property type="pathway name" value="Turbulent (oscillatory, disturbed) flow shear stress activates signaling by PIEZO1 and integrins in endothelial cells"/>
</dbReference>
<dbReference type="SignaLink" id="P46937"/>
<dbReference type="SIGNOR" id="P46937"/>
<dbReference type="BioGRID-ORCS" id="10413">
    <property type="hits" value="165 hits in 1155 CRISPR screens"/>
</dbReference>
<dbReference type="CD-CODE" id="03E7CE7B">
    <property type="entry name" value="NEDD4 condensates"/>
</dbReference>
<dbReference type="CD-CODE" id="38EC0B30">
    <property type="entry name" value="Transcriptional condensate"/>
</dbReference>
<dbReference type="CD-CODE" id="F11B6494">
    <property type="entry name" value="Synthetic Condensate 000269"/>
</dbReference>
<dbReference type="ChiTaRS" id="YAP1">
    <property type="organism name" value="human"/>
</dbReference>
<dbReference type="EvolutionaryTrace" id="P46937"/>
<dbReference type="GeneWiki" id="YAP1"/>
<dbReference type="GenomeRNAi" id="10413"/>
<dbReference type="Pharos" id="P46937">
    <property type="development level" value="Tchem"/>
</dbReference>
<dbReference type="PRO" id="PR:P46937"/>
<dbReference type="Proteomes" id="UP000005640">
    <property type="component" value="Chromosome 11"/>
</dbReference>
<dbReference type="RNAct" id="P46937">
    <property type="molecule type" value="protein"/>
</dbReference>
<dbReference type="Bgee" id="ENSG00000137693">
    <property type="expression patterns" value="Expressed in saphenous vein and 193 other cell types or tissues"/>
</dbReference>
<dbReference type="ExpressionAtlas" id="P46937">
    <property type="expression patterns" value="baseline and differential"/>
</dbReference>
<dbReference type="GO" id="GO:0005923">
    <property type="term" value="C:bicellular tight junction"/>
    <property type="evidence" value="ECO:0007669"/>
    <property type="project" value="UniProtKB-SubCell"/>
</dbReference>
<dbReference type="GO" id="GO:0030054">
    <property type="term" value="C:cell junction"/>
    <property type="evidence" value="ECO:0000314"/>
    <property type="project" value="HPA"/>
</dbReference>
<dbReference type="GO" id="GO:0005911">
    <property type="term" value="C:cell-cell junction"/>
    <property type="evidence" value="ECO:0000250"/>
    <property type="project" value="UniProtKB"/>
</dbReference>
<dbReference type="GO" id="GO:0005737">
    <property type="term" value="C:cytoplasm"/>
    <property type="evidence" value="ECO:0000314"/>
    <property type="project" value="UniProtKB"/>
</dbReference>
<dbReference type="GO" id="GO:0005829">
    <property type="term" value="C:cytosol"/>
    <property type="evidence" value="ECO:0000314"/>
    <property type="project" value="FlyBase"/>
</dbReference>
<dbReference type="GO" id="GO:0001674">
    <property type="term" value="C:female germ cell nucleus"/>
    <property type="evidence" value="ECO:0007669"/>
    <property type="project" value="Ensembl"/>
</dbReference>
<dbReference type="GO" id="GO:0005739">
    <property type="term" value="C:mitochondrion"/>
    <property type="evidence" value="ECO:0000314"/>
    <property type="project" value="HPA"/>
</dbReference>
<dbReference type="GO" id="GO:0005654">
    <property type="term" value="C:nucleoplasm"/>
    <property type="evidence" value="ECO:0000314"/>
    <property type="project" value="HPA"/>
</dbReference>
<dbReference type="GO" id="GO:0005634">
    <property type="term" value="C:nucleus"/>
    <property type="evidence" value="ECO:0000314"/>
    <property type="project" value="UniProt"/>
</dbReference>
<dbReference type="GO" id="GO:0005886">
    <property type="term" value="C:plasma membrane"/>
    <property type="evidence" value="ECO:0000314"/>
    <property type="project" value="UniProtKB"/>
</dbReference>
<dbReference type="GO" id="GO:0140552">
    <property type="term" value="C:TEAD-YAP complex"/>
    <property type="evidence" value="ECO:0000314"/>
    <property type="project" value="CAFA"/>
</dbReference>
<dbReference type="GO" id="GO:0003682">
    <property type="term" value="F:chromatin binding"/>
    <property type="evidence" value="ECO:0007669"/>
    <property type="project" value="Ensembl"/>
</dbReference>
<dbReference type="GO" id="GO:0140297">
    <property type="term" value="F:DNA-binding transcription factor binding"/>
    <property type="evidence" value="ECO:0000353"/>
    <property type="project" value="CAFA"/>
</dbReference>
<dbReference type="GO" id="GO:0070064">
    <property type="term" value="F:proline-rich region binding"/>
    <property type="evidence" value="ECO:0007669"/>
    <property type="project" value="Ensembl"/>
</dbReference>
<dbReference type="GO" id="GO:0000978">
    <property type="term" value="F:RNA polymerase II cis-regulatory region sequence-specific DNA binding"/>
    <property type="evidence" value="ECO:0007669"/>
    <property type="project" value="Ensembl"/>
</dbReference>
<dbReference type="GO" id="GO:0000976">
    <property type="term" value="F:transcription cis-regulatory region binding"/>
    <property type="evidence" value="ECO:0000314"/>
    <property type="project" value="UniProtKB"/>
</dbReference>
<dbReference type="GO" id="GO:0003713">
    <property type="term" value="F:transcription coactivator activity"/>
    <property type="evidence" value="ECO:0000314"/>
    <property type="project" value="UniProtKB"/>
</dbReference>
<dbReference type="GO" id="GO:0003712">
    <property type="term" value="F:transcription coregulator activity"/>
    <property type="evidence" value="ECO:0000314"/>
    <property type="project" value="UniProt"/>
</dbReference>
<dbReference type="GO" id="GO:0003714">
    <property type="term" value="F:transcription corepressor activity"/>
    <property type="evidence" value="ECO:0000314"/>
    <property type="project" value="UniProtKB"/>
</dbReference>
<dbReference type="GO" id="GO:0060449">
    <property type="term" value="P:bud elongation involved in lung branching"/>
    <property type="evidence" value="ECO:0007669"/>
    <property type="project" value="Ensembl"/>
</dbReference>
<dbReference type="GO" id="GO:0060070">
    <property type="term" value="P:canonical Wnt signaling pathway"/>
    <property type="evidence" value="ECO:0007669"/>
    <property type="project" value="Ensembl"/>
</dbReference>
<dbReference type="GO" id="GO:0061026">
    <property type="term" value="P:cardiac muscle tissue regeneration"/>
    <property type="evidence" value="ECO:0007669"/>
    <property type="project" value="Ensembl"/>
</dbReference>
<dbReference type="GO" id="GO:0000902">
    <property type="term" value="P:cell morphogenesis"/>
    <property type="evidence" value="ECO:0007669"/>
    <property type="project" value="Ensembl"/>
</dbReference>
<dbReference type="GO" id="GO:0071480">
    <property type="term" value="P:cellular response to gamma radiation"/>
    <property type="evidence" value="ECO:0000314"/>
    <property type="project" value="UniProtKB"/>
</dbReference>
<dbReference type="GO" id="GO:0071300">
    <property type="term" value="P:cellular response to retinoic acid"/>
    <property type="evidence" value="ECO:0007669"/>
    <property type="project" value="Ensembl"/>
</dbReference>
<dbReference type="GO" id="GO:0006974">
    <property type="term" value="P:DNA damage response"/>
    <property type="evidence" value="ECO:0000314"/>
    <property type="project" value="UniProtKB"/>
</dbReference>
<dbReference type="GO" id="GO:0003143">
    <property type="term" value="P:embryonic heart tube morphogenesis"/>
    <property type="evidence" value="ECO:0007669"/>
    <property type="project" value="Ensembl"/>
</dbReference>
<dbReference type="GO" id="GO:1903703">
    <property type="term" value="P:enterocyte differentiation"/>
    <property type="evidence" value="ECO:0007669"/>
    <property type="project" value="Ensembl"/>
</dbReference>
<dbReference type="GO" id="GO:0050673">
    <property type="term" value="P:epithelial cell proliferation"/>
    <property type="evidence" value="ECO:0000250"/>
    <property type="project" value="UniProtKB"/>
</dbReference>
<dbReference type="GO" id="GO:0097191">
    <property type="term" value="P:extrinsic apoptotic signaling pathway"/>
    <property type="evidence" value="ECO:0007669"/>
    <property type="project" value="Ensembl"/>
</dbReference>
<dbReference type="GO" id="GO:0002067">
    <property type="term" value="P:glandular epithelial cell differentiation"/>
    <property type="evidence" value="ECO:0007669"/>
    <property type="project" value="Ensembl"/>
</dbReference>
<dbReference type="GO" id="GO:0003015">
    <property type="term" value="P:heart process"/>
    <property type="evidence" value="ECO:0007669"/>
    <property type="project" value="Ensembl"/>
</dbReference>
<dbReference type="GO" id="GO:0035329">
    <property type="term" value="P:hippo signaling"/>
    <property type="evidence" value="ECO:0000314"/>
    <property type="project" value="UniProt"/>
</dbReference>
<dbReference type="GO" id="GO:0070102">
    <property type="term" value="P:interleukin-6-mediated signaling pathway"/>
    <property type="evidence" value="ECO:0007669"/>
    <property type="project" value="Ensembl"/>
</dbReference>
<dbReference type="GO" id="GO:0060576">
    <property type="term" value="P:intestinal epithelial cell development"/>
    <property type="evidence" value="ECO:0007669"/>
    <property type="project" value="Ensembl"/>
</dbReference>
<dbReference type="GO" id="GO:0030216">
    <property type="term" value="P:keratinocyte differentiation"/>
    <property type="evidence" value="ECO:0007669"/>
    <property type="project" value="Ensembl"/>
</dbReference>
<dbReference type="GO" id="GO:0048368">
    <property type="term" value="P:lateral mesoderm development"/>
    <property type="evidence" value="ECO:0007669"/>
    <property type="project" value="Ensembl"/>
</dbReference>
<dbReference type="GO" id="GO:0060487">
    <property type="term" value="P:lung epithelial cell differentiation"/>
    <property type="evidence" value="ECO:0007669"/>
    <property type="project" value="Ensembl"/>
</dbReference>
<dbReference type="GO" id="GO:1902018">
    <property type="term" value="P:negative regulation of cilium assembly"/>
    <property type="evidence" value="ECO:0000315"/>
    <property type="project" value="UniProtKB"/>
</dbReference>
<dbReference type="GO" id="GO:1904036">
    <property type="term" value="P:negative regulation of epithelial cell apoptotic process"/>
    <property type="evidence" value="ECO:0000315"/>
    <property type="project" value="CACAO"/>
</dbReference>
<dbReference type="GO" id="GO:0030857">
    <property type="term" value="P:negative regulation of epithelial cell differentiation"/>
    <property type="evidence" value="ECO:0007669"/>
    <property type="project" value="Ensembl"/>
</dbReference>
<dbReference type="GO" id="GO:2001237">
    <property type="term" value="P:negative regulation of extrinsic apoptotic signaling pathway"/>
    <property type="evidence" value="ECO:0007669"/>
    <property type="project" value="Ensembl"/>
</dbReference>
<dbReference type="GO" id="GO:0045599">
    <property type="term" value="P:negative regulation of fat cell differentiation"/>
    <property type="evidence" value="ECO:0000315"/>
    <property type="project" value="ARUK-UCL"/>
</dbReference>
<dbReference type="GO" id="GO:0010629">
    <property type="term" value="P:negative regulation of gene expression"/>
    <property type="evidence" value="ECO:0000315"/>
    <property type="project" value="CACAO"/>
</dbReference>
<dbReference type="GO" id="GO:2000737">
    <property type="term" value="P:negative regulation of stem cell differentiation"/>
    <property type="evidence" value="ECO:0007669"/>
    <property type="project" value="Ensembl"/>
</dbReference>
<dbReference type="GO" id="GO:0000122">
    <property type="term" value="P:negative regulation of transcription by RNA polymerase II"/>
    <property type="evidence" value="ECO:0000315"/>
    <property type="project" value="UniProtKB"/>
</dbReference>
<dbReference type="GO" id="GO:0030903">
    <property type="term" value="P:notochord development"/>
    <property type="evidence" value="ECO:0007669"/>
    <property type="project" value="Ensembl"/>
</dbReference>
<dbReference type="GO" id="GO:0035265">
    <property type="term" value="P:organ growth"/>
    <property type="evidence" value="ECO:0000250"/>
    <property type="project" value="UniProtKB"/>
</dbReference>
<dbReference type="GO" id="GO:0048339">
    <property type="term" value="P:paraxial mesoderm development"/>
    <property type="evidence" value="ECO:0007669"/>
    <property type="project" value="Ensembl"/>
</dbReference>
<dbReference type="GO" id="GO:0030859">
    <property type="term" value="P:polarized epithelial cell differentiation"/>
    <property type="evidence" value="ECO:0000305"/>
    <property type="project" value="UniProt"/>
</dbReference>
<dbReference type="GO" id="GO:0090263">
    <property type="term" value="P:positive regulation of canonical Wnt signaling pathway"/>
    <property type="evidence" value="ECO:0007669"/>
    <property type="project" value="Ensembl"/>
</dbReference>
<dbReference type="GO" id="GO:0060045">
    <property type="term" value="P:positive regulation of cardiac muscle cell proliferation"/>
    <property type="evidence" value="ECO:0007669"/>
    <property type="project" value="Ensembl"/>
</dbReference>
<dbReference type="GO" id="GO:0030307">
    <property type="term" value="P:positive regulation of cell growth"/>
    <property type="evidence" value="ECO:0000314"/>
    <property type="project" value="UniProtKB"/>
</dbReference>
<dbReference type="GO" id="GO:0045893">
    <property type="term" value="P:positive regulation of DNA-templated transcription"/>
    <property type="evidence" value="ECO:0000314"/>
    <property type="project" value="CAFA"/>
</dbReference>
<dbReference type="GO" id="GO:0050679">
    <property type="term" value="P:positive regulation of epithelial cell proliferation"/>
    <property type="evidence" value="ECO:0000315"/>
    <property type="project" value="CACAO"/>
</dbReference>
<dbReference type="GO" id="GO:0010628">
    <property type="term" value="P:positive regulation of gene expression"/>
    <property type="evidence" value="ECO:0000315"/>
    <property type="project" value="CACAO"/>
</dbReference>
<dbReference type="GO" id="GO:0045747">
    <property type="term" value="P:positive regulation of Notch signaling pathway"/>
    <property type="evidence" value="ECO:0007669"/>
    <property type="project" value="Ensembl"/>
</dbReference>
<dbReference type="GO" id="GO:0045669">
    <property type="term" value="P:positive regulation of osteoblast differentiation"/>
    <property type="evidence" value="ECO:0000315"/>
    <property type="project" value="ARUK-UCL"/>
</dbReference>
<dbReference type="GO" id="GO:1900182">
    <property type="term" value="P:positive regulation of protein localization to nucleus"/>
    <property type="evidence" value="ECO:0000250"/>
    <property type="project" value="UniProtKB"/>
</dbReference>
<dbReference type="GO" id="GO:1902459">
    <property type="term" value="P:positive regulation of stem cell population maintenance"/>
    <property type="evidence" value="ECO:0007669"/>
    <property type="project" value="Ensembl"/>
</dbReference>
<dbReference type="GO" id="GO:0045944">
    <property type="term" value="P:positive regulation of transcription by RNA polymerase II"/>
    <property type="evidence" value="ECO:0000314"/>
    <property type="project" value="CAFA"/>
</dbReference>
<dbReference type="GO" id="GO:0065003">
    <property type="term" value="P:protein-containing complex assembly"/>
    <property type="evidence" value="ECO:0000314"/>
    <property type="project" value="CAFA"/>
</dbReference>
<dbReference type="GO" id="GO:0010837">
    <property type="term" value="P:regulation of keratinocyte proliferation"/>
    <property type="evidence" value="ECO:0007669"/>
    <property type="project" value="Ensembl"/>
</dbReference>
<dbReference type="GO" id="GO:0072307">
    <property type="term" value="P:regulation of metanephric nephron tubule epithelial cell differentiation"/>
    <property type="evidence" value="ECO:0007669"/>
    <property type="project" value="Ensembl"/>
</dbReference>
<dbReference type="GO" id="GO:0050767">
    <property type="term" value="P:regulation of neurogenesis"/>
    <property type="evidence" value="ECO:0000314"/>
    <property type="project" value="MGI"/>
</dbReference>
<dbReference type="GO" id="GO:0072091">
    <property type="term" value="P:regulation of stem cell proliferation"/>
    <property type="evidence" value="ECO:0000314"/>
    <property type="project" value="MGI"/>
</dbReference>
<dbReference type="GO" id="GO:0032570">
    <property type="term" value="P:response to progesterone"/>
    <property type="evidence" value="ECO:0000314"/>
    <property type="project" value="UniProtKB"/>
</dbReference>
<dbReference type="GO" id="GO:0035019">
    <property type="term" value="P:somatic stem cell population maintenance"/>
    <property type="evidence" value="ECO:0007669"/>
    <property type="project" value="Ensembl"/>
</dbReference>
<dbReference type="GO" id="GO:0001894">
    <property type="term" value="P:tissue homeostasis"/>
    <property type="evidence" value="ECO:0007669"/>
    <property type="project" value="Ensembl"/>
</dbReference>
<dbReference type="GO" id="GO:0001829">
    <property type="term" value="P:trophectodermal cell differentiation"/>
    <property type="evidence" value="ECO:0007669"/>
    <property type="project" value="Ensembl"/>
</dbReference>
<dbReference type="GO" id="GO:0001570">
    <property type="term" value="P:vasculogenesis"/>
    <property type="evidence" value="ECO:0007669"/>
    <property type="project" value="Ensembl"/>
</dbReference>
<dbReference type="GO" id="GO:0042060">
    <property type="term" value="P:wound healing"/>
    <property type="evidence" value="ECO:0007669"/>
    <property type="project" value="Ensembl"/>
</dbReference>
<dbReference type="CDD" id="cd00201">
    <property type="entry name" value="WW"/>
    <property type="match status" value="2"/>
</dbReference>
<dbReference type="DisProt" id="DP00702"/>
<dbReference type="FunFam" id="2.20.70.10:FF:000019">
    <property type="entry name" value="Putative transcriptional coactivator YAP1"/>
    <property type="match status" value="1"/>
</dbReference>
<dbReference type="FunFam" id="2.20.70.10:FF:000012">
    <property type="entry name" value="transcriptional coactivator YAP1 isoform X2"/>
    <property type="match status" value="1"/>
</dbReference>
<dbReference type="Gene3D" id="2.20.70.10">
    <property type="match status" value="2"/>
</dbReference>
<dbReference type="Gene3D" id="6.20.430.10">
    <property type="match status" value="1"/>
</dbReference>
<dbReference type="IDEAL" id="IID00304"/>
<dbReference type="InterPro" id="IPR053819">
    <property type="entry name" value="TEADIR3_omega_loop"/>
</dbReference>
<dbReference type="InterPro" id="IPR001202">
    <property type="entry name" value="WW_dom"/>
</dbReference>
<dbReference type="InterPro" id="IPR036020">
    <property type="entry name" value="WW_dom_sf"/>
</dbReference>
<dbReference type="InterPro" id="IPR051583">
    <property type="entry name" value="YAP1"/>
</dbReference>
<dbReference type="PANTHER" id="PTHR17616:SF9">
    <property type="entry name" value="TRANSCRIPTIONAL COACTIVATOR YAP1"/>
    <property type="match status" value="1"/>
</dbReference>
<dbReference type="PANTHER" id="PTHR17616">
    <property type="entry name" value="YES-ASSOCIATED PROTEIN YAP1 FAMILY MEMBER"/>
    <property type="match status" value="1"/>
</dbReference>
<dbReference type="Pfam" id="PF15238">
    <property type="entry name" value="TEADIR3"/>
    <property type="match status" value="1"/>
</dbReference>
<dbReference type="Pfam" id="PF00397">
    <property type="entry name" value="WW"/>
    <property type="match status" value="2"/>
</dbReference>
<dbReference type="SMART" id="SM00456">
    <property type="entry name" value="WW"/>
    <property type="match status" value="2"/>
</dbReference>
<dbReference type="SUPFAM" id="SSF51045">
    <property type="entry name" value="WW domain"/>
    <property type="match status" value="2"/>
</dbReference>
<dbReference type="PROSITE" id="PS01159">
    <property type="entry name" value="WW_DOMAIN_1"/>
    <property type="match status" value="2"/>
</dbReference>
<dbReference type="PROSITE" id="PS50020">
    <property type="entry name" value="WW_DOMAIN_2"/>
    <property type="match status" value="2"/>
</dbReference>
<gene>
    <name evidence="44" type="primary">YAP1</name>
    <name type="synonym">YAP65</name>
</gene>
<comment type="function">
    <text evidence="2 9 12 13 14 15 21 26 27 28 32 34">Transcriptional regulator with dual roles as a coactivator and corepressor. Critical downstream regulatory target in the Hippo signaling pathway, crucial for organ size control and tumor suppression by restricting proliferation and promoting apoptosis (PubMed:17974916, PubMed:18280240, PubMed:18579750, PubMed:21364637, PubMed:30447097). The Hippo signaling pathway core involves a kinase cascade featuring STK3/MST2 and STK4/MST1, along with its regulatory partner SAV1, which phosphorylates and activates LATS1/2 in complex with their regulatory protein, MOB1. This activation leads to the phosphorylation and inactivation of the YAP1 oncoprotein and WWTR1/TAZ (PubMed:18158288). Phosphorylation of YAP1 by LATS1/2 prevents its nuclear translocation, thereby regulating the expression of its target genes (PubMed:18158288, PubMed:26598551, PubMed:34404733). The transcriptional regulation of gene expression requires TEAD transcription factors and modulates cell growth, anchorage-independent growth, and induction of epithelial-mesenchymal transition (EMT) (PubMed:18579750). Plays a key role in tissue tension and 3D tissue shape by regulating the cortical actomyosin network, acting via ARHGAP18, a Rho GTPase activating protein that suppresses F-actin polymerization (PubMed:25778702). It also suppresses ciliogenesis by acting as a transcriptional corepressor of TEAD4 target genes AURKA and PLK1 (PubMed:25849865). In conjunction with WWTR1, regulates TGFB1-dependent SMAD2 and SMAD3 nuclear accumulation (By similarity). Synergizes with WBP2 to enhance PGR activity (PubMed:16772533).</text>
</comment>
<comment type="function">
    <molecule>Isoform 2</molecule>
    <text evidence="7">Activates the C-terminal fragment (CTF) of ERBB4 (isoform 3).</text>
</comment>
<comment type="function">
    <molecule>Isoform 3</molecule>
    <text evidence="7">Activates the C-terminal fragment (CTF) of ERBB4 (isoform 3).</text>
</comment>
<comment type="subunit">
    <text evidence="2 7 10 11 12 13 14 15 17 18 20 22 23 24 28 33 37">Part of a complex when phosphorylated that contains DSG3, PKP1, YAP1 and YWHAG; the complex is required for localization of DSG3 and YAP1 to the cell membrane in keratinocytes (PubMed:31835537). Binds to the SH3 domain of the YES kinase. Binds to WBP1 and WBP2 (PubMed:9202023). Binds, in vitro, through the WW1 domain, to neural isoforms of ENAH that contain the PPSY motif (By similarity). The phosphorylated form interacts with YWHAB (PubMed:17974916). Interacts (via WW domains) with LATS1 (via PPxY motif 2) (PubMed:18158288). Interacts with LATS2 (PubMed:18158288). Interacts with TEAD1, TEAD2, TEAD3 and TEAD4 (PubMed:18579750, PubMed:20123905, PubMed:20123908). Interacts with TP73 (PubMed:18280240). Interacts with RUNX1 (PubMed:18280240). Interacts with HCK (PubMed:17535448). Interacts (via WW domains) with PTPN14 (via PPxY motif 2); this interaction leads to the cytoplasmic sequestration of YAP1 and inhibits its transcriptional coactivator activity (PubMed:22525271). Interacts (when phosphorylated at Ser-127) with SMAD2, SMAD3 and WWTR1 (By similarity). Interacts with PRRG2 (via cytoplasmic domain) (PubMed:17502622). Interacts (via WW domains) with PRRG4 (via cytoplasmic domain) (PubMed:23873930). Interacts (phosphorylated) with CLDN18; the interaction sequesters YAP1 away from the nucleus and thereby restricts transcription of YAP1 target genes (By similarity). Interacts with SMAD1 (PubMed:21685363). Interacts with AMOTL2, the interaction is required for ubiquitination of AMOTL2 and localization of YAP1 to tight junctions (PubMed:21205866, PubMed:26598551). Interacts with AMOT isoform 1; the interaction facilitates translocation of YAP1 to the cytoplasm and tight junctions (PubMed:21205866).</text>
</comment>
<comment type="subunit">
    <molecule>Isoform 3</molecule>
    <text evidence="7">Interacts (via WW domain 1) with isoform 3 of ERBB4 (via PPxY motif 2).</text>
</comment>
<comment type="subunit">
    <molecule>Isoform 2</molecule>
    <text evidence="7">Interacts (via WW domain 1) with isoform 3 of ERBB4 (via PPxY motif 2).</text>
</comment>
<comment type="interaction">
    <interactant intactId="EBI-1044059">
        <id>P46937</id>
    </interactant>
    <interactant intactId="EBI-710484">
        <id>O15169</id>
        <label>AXIN1</label>
    </interactant>
    <organismsDiffer>false</organismsDiffer>
    <experiments>11</experiments>
</comment>
<comment type="interaction">
    <interactant intactId="EBI-1044059">
        <id>P46937</id>
    </interactant>
    <interactant intactId="EBI-307461">
        <id>Q9Y297</id>
        <label>BTRC</label>
    </interactant>
    <organismsDiffer>false</organismsDiffer>
    <experiments>3</experiments>
</comment>
<comment type="interaction">
    <interactant intactId="EBI-1044059">
        <id>P46937</id>
    </interactant>
    <interactant intactId="EBI-491549">
        <id>P35222</id>
        <label>CTNNB1</label>
    </interactant>
    <organismsDiffer>false</organismsDiffer>
    <experiments>15</experiments>
</comment>
<comment type="interaction">
    <interactant intactId="EBI-1044059">
        <id>P46937</id>
    </interactant>
    <interactant intactId="EBI-746012">
        <id>Q92841</id>
        <label>DDX17</label>
    </interactant>
    <organismsDiffer>false</organismsDiffer>
    <experiments>7</experiments>
</comment>
<comment type="interaction">
    <interactant intactId="EBI-1044059">
        <id>P46937</id>
    </interactant>
    <interactant intactId="EBI-80371">
        <id>Q15303</id>
        <label>ERBB4</label>
    </interactant>
    <organismsDiffer>false</organismsDiffer>
    <experiments>3</experiments>
</comment>
<comment type="interaction">
    <interactant intactId="EBI-1044059">
        <id>P46937</id>
    </interactant>
    <interactant intactId="EBI-444209">
        <id>O95835</id>
        <label>LATS1</label>
    </interactant>
    <organismsDiffer>false</organismsDiffer>
    <experiments>10</experiments>
</comment>
<comment type="interaction">
    <interactant intactId="EBI-1044059">
        <id>P46937</id>
    </interactant>
    <interactant intactId="EBI-492564">
        <id>Q02750</id>
        <label>MAP2K1</label>
    </interactant>
    <organismsDiffer>false</organismsDiffer>
    <experiments>3</experiments>
</comment>
<comment type="interaction">
    <interactant intactId="EBI-1044059">
        <id>P46937</id>
    </interactant>
    <interactant intactId="EBI-1149760">
        <id>Q15599</id>
        <label>NHERF2</label>
    </interactant>
    <organismsDiffer>false</organismsDiffer>
    <experiments>5</experiments>
</comment>
<comment type="interaction">
    <interactant intactId="EBI-1044059">
        <id>P46937</id>
    </interactant>
    <interactant intactId="EBI-1181405">
        <id>Q13131</id>
        <label>PRKAA1</label>
    </interactant>
    <organismsDiffer>false</organismsDiffer>
    <experiments>3</experiments>
</comment>
<comment type="interaction">
    <interactant intactId="EBI-1044059">
        <id>P46937</id>
    </interactant>
    <interactant intactId="EBI-9824765">
        <id>O14669</id>
        <label>PRRG2</label>
    </interactant>
    <organismsDiffer>false</organismsDiffer>
    <experiments>5</experiments>
</comment>
<comment type="interaction">
    <interactant intactId="EBI-1044059">
        <id>P46937</id>
    </interactant>
    <interactant intactId="EBI-3918643">
        <id>Q9BZD6</id>
        <label>PRRG4</label>
    </interactant>
    <organismsDiffer>false</organismsDiffer>
    <experiments>5</experiments>
</comment>
<comment type="interaction">
    <interactant intactId="EBI-1044059">
        <id>P46937</id>
    </interactant>
    <interactant intactId="EBI-8775406">
        <id>Q13635</id>
        <label>PTCH1</label>
    </interactant>
    <organismsDiffer>false</organismsDiffer>
    <experiments>3</experiments>
</comment>
<comment type="interaction">
    <interactant intactId="EBI-1044059">
        <id>P46937</id>
    </interactant>
    <interactant intactId="EBI-1237156">
        <id>Q15678</id>
        <label>PTPN14</label>
    </interactant>
    <organismsDiffer>false</organismsDiffer>
    <experiments>8</experiments>
</comment>
<comment type="interaction">
    <interactant intactId="EBI-1044059">
        <id>P46937</id>
    </interactant>
    <interactant intactId="EBI-745098">
        <id>P62491</id>
        <label>RAB11A</label>
    </interactant>
    <organismsDiffer>false</organismsDiffer>
    <experiments>2</experiments>
</comment>
<comment type="interaction">
    <interactant intactId="EBI-1044059">
        <id>P46937</id>
    </interactant>
    <interactant intactId="EBI-925904">
        <id>Q01196</id>
        <label>RUNX1</label>
    </interactant>
    <organismsDiffer>false</organismsDiffer>
    <experiments>3</experiments>
</comment>
<comment type="interaction">
    <interactant intactId="EBI-1044059">
        <id>P46937</id>
    </interactant>
    <interactant intactId="EBI-357345">
        <id>Q14160</id>
        <label>SCRIB</label>
    </interactant>
    <organismsDiffer>false</organismsDiffer>
    <experiments>2</experiments>
</comment>
<comment type="interaction">
    <interactant intactId="EBI-1044059">
        <id>P46937</id>
    </interactant>
    <interactant intactId="EBI-1567153">
        <id>Q15797</id>
        <label>SMAD1</label>
    </interactant>
    <organismsDiffer>false</organismsDiffer>
    <experiments>3</experiments>
</comment>
<comment type="interaction">
    <interactant intactId="EBI-1044059">
        <id>P46937</id>
    </interactant>
    <interactant intactId="EBI-3861591">
        <id>O15105</id>
        <label>SMAD7</label>
    </interactant>
    <organismsDiffer>false</organismsDiffer>
    <experiments>7</experiments>
</comment>
<comment type="interaction">
    <interactant intactId="EBI-1044059">
        <id>P46937</id>
    </interactant>
    <interactant intactId="EBI-3929549">
        <id>O14544</id>
        <label>SOCS6</label>
    </interactant>
    <organismsDiffer>false</organismsDiffer>
    <experiments>2</experiments>
</comment>
<comment type="interaction">
    <interactant intactId="EBI-1044059">
        <id>P46937</id>
    </interactant>
    <interactant intactId="EBI-297043">
        <id>Q99593</id>
        <label>TBX5</label>
    </interactant>
    <organismsDiffer>false</organismsDiffer>
    <experiments>4</experiments>
</comment>
<comment type="interaction">
    <interactant intactId="EBI-1044059">
        <id>P46937</id>
    </interactant>
    <interactant intactId="EBI-529156">
        <id>P28347</id>
        <label>TEAD1</label>
    </interactant>
    <organismsDiffer>false</organismsDiffer>
    <experiments>11</experiments>
</comment>
<comment type="interaction">
    <interactant intactId="EBI-1044059">
        <id>P46937</id>
    </interactant>
    <interactant intactId="EBI-6427252">
        <id>Q15562</id>
        <label>TEAD2</label>
    </interactant>
    <organismsDiffer>false</organismsDiffer>
    <experiments>9</experiments>
</comment>
<comment type="interaction">
    <interactant intactId="EBI-1044059">
        <id>P46937</id>
    </interactant>
    <interactant intactId="EBI-9370956">
        <id>Q15562-2</id>
        <label>TEAD2</label>
    </interactant>
    <organismsDiffer>false</organismsDiffer>
    <experiments>3</experiments>
</comment>
<comment type="interaction">
    <interactant intactId="EBI-1044059">
        <id>P46937</id>
    </interactant>
    <interactant intactId="EBI-747736">
        <id>Q15561</id>
        <label>TEAD4</label>
    </interactant>
    <organismsDiffer>false</organismsDiffer>
    <experiments>12</experiments>
</comment>
<comment type="interaction">
    <interactant intactId="EBI-1044059">
        <id>P46937</id>
    </interactant>
    <interactant intactId="EBI-7238458">
        <id>Q8IV31</id>
        <label>TMEM139</label>
    </interactant>
    <organismsDiffer>false</organismsDiffer>
    <experiments>2</experiments>
</comment>
<comment type="interaction">
    <interactant intactId="EBI-1044059">
        <id>P46937</id>
    </interactant>
    <interactant intactId="EBI-287091">
        <id>Q13625-2</id>
        <label>TP53BP2</label>
    </interactant>
    <organismsDiffer>false</organismsDiffer>
    <experiments>9</experiments>
</comment>
<comment type="interaction">
    <interactant intactId="EBI-1044059">
        <id>P46937</id>
    </interactant>
    <interactant intactId="EBI-2337775">
        <id>Q9H3D4</id>
        <label>TP63</label>
    </interactant>
    <organismsDiffer>false</organismsDiffer>
    <experiments>2</experiments>
</comment>
<comment type="interaction">
    <interactant intactId="EBI-1044059">
        <id>P46937</id>
    </interactant>
    <interactant intactId="EBI-389606">
        <id>O15350</id>
        <label>TP73</label>
    </interactant>
    <organismsDiffer>false</organismsDiffer>
    <experiments>5</experiments>
</comment>
<comment type="interaction">
    <interactant intactId="EBI-1044059">
        <id>P46937</id>
    </interactant>
    <interactant intactId="EBI-389619">
        <id>O15350-1</id>
        <label>TP73</label>
    </interactant>
    <organismsDiffer>false</organismsDiffer>
    <experiments>7</experiments>
</comment>
<comment type="interaction">
    <interactant intactId="EBI-1044059">
        <id>P46937</id>
    </interactant>
    <interactant intactId="EBI-3505166">
        <id>Q96PN7</id>
        <label>TRERF1</label>
    </interactant>
    <organismsDiffer>false</organismsDiffer>
    <experiments>2</experiments>
</comment>
<comment type="interaction">
    <interactant intactId="EBI-1044059">
        <id>P46937</id>
    </interactant>
    <interactant intactId="EBI-2952704">
        <id>Q9P2Y5</id>
        <label>UVRAG</label>
    </interactant>
    <organismsDiffer>false</organismsDiffer>
    <experiments>2</experiments>
</comment>
<comment type="interaction">
    <interactant intactId="EBI-1044059">
        <id>P46937</id>
    </interactant>
    <interactant intactId="EBI-3867685">
        <id>Q96G27</id>
        <label>WBP1</label>
    </interactant>
    <organismsDiffer>false</organismsDiffer>
    <experiments>4</experiments>
</comment>
<comment type="interaction">
    <interactant intactId="EBI-1044059">
        <id>P46937</id>
    </interactant>
    <interactant intactId="EBI-727055">
        <id>Q969T9</id>
        <label>WBP2</label>
    </interactant>
    <organismsDiffer>false</organismsDiffer>
    <experiments>7</experiments>
</comment>
<comment type="interaction">
    <interactant intactId="EBI-1044059">
        <id>P46937</id>
    </interactant>
    <interactant intactId="EBI-359815">
        <id>P31946</id>
        <label>YWHAB</label>
    </interactant>
    <organismsDiffer>false</organismsDiffer>
    <experiments>9</experiments>
</comment>
<comment type="interaction">
    <interactant intactId="EBI-1044059">
        <id>P46937</id>
    </interactant>
    <interactant intactId="EBI-356498">
        <id>P62258</id>
        <label>YWHAE</label>
    </interactant>
    <organismsDiffer>false</organismsDiffer>
    <experiments>9</experiments>
</comment>
<comment type="interaction">
    <interactant intactId="EBI-1044059">
        <id>P46937</id>
    </interactant>
    <interactant intactId="EBI-347088">
        <id>P63104</id>
        <label>YWHAZ</label>
    </interactant>
    <organismsDiffer>false</organismsDiffer>
    <experiments>11</experiments>
</comment>
<comment type="interaction">
    <interactant intactId="EBI-1044059">
        <id>P46937</id>
    </interactant>
    <interactant intactId="EBI-2365912">
        <id>O35625</id>
        <label>Axin1</label>
    </interactant>
    <organismsDiffer>true</organismsDiffer>
    <experiments>3</experiments>
</comment>
<comment type="interaction">
    <interactant intactId="EBI-1044059">
        <id>P46937</id>
    </interactant>
    <interactant intactId="EBI-40246018">
        <id>A3RM21</id>
        <label>M</label>
    </interactant>
    <organismsDiffer>true</organismsDiffer>
    <experiments>2</experiments>
</comment>
<comment type="interaction">
    <interactant intactId="EBI-1044059">
        <id>P46937</id>
    </interactant>
    <interactant intactId="EBI-7282395">
        <id>Q5EG47</id>
        <label>Prkaa1</label>
    </interactant>
    <organismsDiffer>true</organismsDiffer>
    <experiments>2</experiments>
</comment>
<comment type="interaction">
    <interactant intactId="EBI-1044059">
        <id>P46937</id>
    </interactant>
    <interactant intactId="EBI-6304160">
        <id>P97764</id>
        <label>Wbp1</label>
    </interactant>
    <organismsDiffer>true</organismsDiffer>
    <experiments>13</experiments>
</comment>
<comment type="interaction">
    <interactant intactId="EBI-26604877">
        <id>P46937-1</id>
    </interactant>
    <interactant intactId="EBI-3918643">
        <id>Q9BZD6</id>
        <label>PRRG4</label>
    </interactant>
    <organismsDiffer>false</organismsDiffer>
    <experiments>2</experiments>
</comment>
<comment type="interaction">
    <interactant intactId="EBI-6558686">
        <id>P46937-3</id>
    </interactant>
    <interactant intactId="EBI-491549">
        <id>P35222</id>
        <label>CTNNB1</label>
    </interactant>
    <organismsDiffer>false</organismsDiffer>
    <experiments>2</experiments>
</comment>
<comment type="interaction">
    <interactant intactId="EBI-6558686">
        <id>P46937-3</id>
    </interactant>
    <interactant intactId="EBI-3918643">
        <id>Q9BZD6</id>
        <label>PRRG4</label>
    </interactant>
    <organismsDiffer>false</organismsDiffer>
    <experiments>3</experiments>
</comment>
<comment type="subcellular location">
    <subcellularLocation>
        <location evidence="13 14 16 20 23 27 28 30 31 33 34">Cytoplasm</location>
    </subcellularLocation>
    <subcellularLocation>
        <location evidence="12 13 14 16 19 20 23 27 28 29 30 31 32 33 34 35">Nucleus</location>
    </subcellularLocation>
    <subcellularLocation>
        <location evidence="1">Cell junction</location>
        <location evidence="1">Tight junction</location>
    </subcellularLocation>
    <subcellularLocation>
        <location evidence="33">Cell membrane</location>
    </subcellularLocation>
    <text evidence="1 2 13 16 20 23 27 31 33 34">Both phosphorylation and cell density can regulate its subcellular localization (PubMed:18158288, PubMed:20048001). Phosphorylation sequesters it in the cytoplasm by inhibiting its translocation into the nucleus (PubMed:18158288, PubMed:20048001, PubMed:34404733). At low density, predominantly nuclear and is translocated to the cytoplasm at high density (PubMed:18158288, PubMed:20048001, PubMed:25849865). PTPN14 induces translocation from the nucleus to the cytoplasm (PubMed:22525271). In the nucleus, phosphorylation by PRP4K induces nuclear exclusion (PubMed:29695716). Localized mainly to the nucleus in the early stages of embryo development with expression becoming evident in the cytoplasm at the blastocyst and epiblast stages (By similarity). Localizes to the cytoplasm and tight junctions following interaction with AMOT isoform 1 (PubMed:21205866). Localizes to tight junctions following interaction with AMOTL2 (By similarity). Translocates to the nucleus in the presence of SNAIL1 (By similarity). Found at the cell membrane in keratinocytes in response to mechanical strain (PubMed:31835537).</text>
</comment>
<comment type="alternative products">
    <event type="alternative splicing"/>
    <isoform>
        <id>P46937-1</id>
        <name>1</name>
        <name>YAP1-2gamma</name>
        <name>YAP2L</name>
        <sequence type="displayed"/>
    </isoform>
    <isoform>
        <id>P46937-2</id>
        <name>2</name>
        <name>YAP1-2alpha</name>
        <name>YAP2</name>
        <sequence type="described" ref="VSP_039054"/>
    </isoform>
    <isoform>
        <id>P46937-3</id>
        <name>3</name>
        <name>YAP1-1beta</name>
        <sequence type="described" ref="VSP_039053 VSP_039055"/>
    </isoform>
    <isoform>
        <id>P46937-4</id>
        <name>4</name>
        <sequence type="described" ref="VSP_045190"/>
    </isoform>
    <isoform>
        <id>P46937-5</id>
        <name>5</name>
        <name>YAP1-1alpha</name>
        <sequence type="described" ref="VSP_039053 VSP_039054"/>
    </isoform>
    <isoform>
        <id>P46937-6</id>
        <name>6</name>
        <name>YAP1-1gamma</name>
        <sequence type="described" ref="VSP_039053"/>
    </isoform>
    <isoform>
        <id>P46937-7</id>
        <name>7</name>
        <name>YAP1-1delta</name>
        <sequence type="described" ref="VSP_039053 VSP_053483"/>
    </isoform>
    <isoform>
        <id>P46937-8</id>
        <name>8</name>
        <name>YAP1-2beta</name>
        <sequence type="described" ref="VSP_039055"/>
    </isoform>
    <isoform>
        <id>P46937-9</id>
        <name>9</name>
        <name>YAP1-2delta</name>
        <sequence type="described" ref="VSP_053483"/>
    </isoform>
    <text>Isoforms of the YAP1-1 form contain only one WW domain.</text>
</comment>
<comment type="tissue specificity">
    <text evidence="8 12 36">Increased expression seen in some liver and prostate cancers. Isoforms lacking the transactivation domain found in striatal neurons of patients with Huntington disease (at protein level).</text>
</comment>
<comment type="induction">
    <text evidence="33">Induced in the hours following cyclic mechanical strain in keratinocytes.</text>
</comment>
<comment type="domain">
    <text evidence="17">The first coiled-coil region mediates most of the interaction with TEAD transcription factors.</text>
</comment>
<comment type="PTM">
    <text evidence="13 14 16 21 31">Phosphorylated by LATS1 and LATS2; leading to cytoplasmic translocation and inactivation (PubMed:18158288, PubMed:20048001). Phosphorylated by ABL1; leading to YAP1 stabilization, enhanced interaction with TP73 and recruitment onto proapoptotic genes; in response to DNA damage (PubMed:18280240). Phosphorylation at Ser-400 and Ser-403 by CK1 is triggered by previous phosphorylation at Ser-397 by LATS proteins and leads to YAP1 ubiquitination by SCF(beta-TRCP) E3 ubiquitin ligase and subsequent degradation (PubMed:20048001). Phosphorylated at Thr-119, Ser-138, Thr-154, Ser-367 and Thr-412 by MAPK8/JNK1 and MAPK9/JNK2, which is required for the regulation of apoptosis by YAP1 (PubMed:21364637). Phosphorylated in the nucleus by PRP4K; phosphorylation leads to nuclear exclusion (PubMed:29695716).</text>
</comment>
<comment type="PTM">
    <text evidence="35">Lactylation by AARS1 promotes nuclear localization and stabilization of YAP1, leading to increased Hippo signaling pathway (PubMed:38512451). Delactylated by SIRT1 (PubMed:38512451).</text>
</comment>
<comment type="PTM">
    <text evidence="16">Ubiquitinated by SCF(beta-TRCP) E3 ubiquitin ligase.</text>
</comment>
<comment type="disease" evidence="25">
    <disease id="DI-04066">
        <name>Coloboma, ocular, with or without hearing impairment, cleft lip/palate, and/or impaired intellectual development</name>
        <acronym>COB1</acronym>
        <description>An autosomal dominant disease characterized by uveal colobomata, microphthalmia, cataract and cleft lip/palate. Considerable variability is observed among patients, uveal colobomata being the most constant feature. Some patients manifest intellectual disability of varying degree and/or sensorineural, mid-frequency hearing loss.</description>
        <dbReference type="MIM" id="120433"/>
    </disease>
    <text>The disease is caused by variants affecting the gene represented in this entry.</text>
</comment>
<comment type="miscellaneous">
    <molecule>Isoform 9</molecule>
    <text evidence="43">Highest expression in ovary and placenta, lowest in skeletal muscle and brain.</text>
</comment>
<comment type="similarity">
    <text evidence="43">Belongs to the YAP1 family.</text>
</comment>
<comment type="online information" name="Atlas of Genetics and Cytogenetics in Oncology and Haematology">
    <link uri="https://atlasgeneticsoncology.org/gene/42855/YAP1"/>
</comment>
<comment type="online information" name="Protein Spotlight">
    <link uri="https://www.proteinspotlight.org/back_issues/175/"/>
    <text>Shaping life - Issue 175 of January 2016</text>
</comment>
<proteinExistence type="evidence at protein level"/>
<protein>
    <recommendedName>
        <fullName>Transcriptional coactivator YAP1</fullName>
        <shortName evidence="41">Yes-associated protein 1</shortName>
    </recommendedName>
    <alternativeName>
        <fullName>Protein yorkie homolog</fullName>
    </alternativeName>
    <alternativeName>
        <fullName>Yes-associated protein YAP65 homolog</fullName>
    </alternativeName>
</protein>
<evidence type="ECO:0000250" key="1">
    <source>
        <dbReference type="UniProtKB" id="A0A8C0NGY6"/>
    </source>
</evidence>
<evidence type="ECO:0000250" key="2">
    <source>
        <dbReference type="UniProtKB" id="P46938"/>
    </source>
</evidence>
<evidence type="ECO:0000250" key="3">
    <source>
        <dbReference type="UniProtKB" id="Q2EJA0"/>
    </source>
</evidence>
<evidence type="ECO:0000255" key="4"/>
<evidence type="ECO:0000255" key="5">
    <source>
        <dbReference type="PROSITE-ProRule" id="PRU00224"/>
    </source>
</evidence>
<evidence type="ECO:0000256" key="6">
    <source>
        <dbReference type="SAM" id="MobiDB-lite"/>
    </source>
</evidence>
<evidence type="ECO:0000269" key="7">
    <source>
    </source>
</evidence>
<evidence type="ECO:0000269" key="8">
    <source>
    </source>
</evidence>
<evidence type="ECO:0000269" key="9">
    <source>
    </source>
</evidence>
<evidence type="ECO:0000269" key="10">
    <source>
    </source>
</evidence>
<evidence type="ECO:0000269" key="11">
    <source>
    </source>
</evidence>
<evidence type="ECO:0000269" key="12">
    <source>
    </source>
</evidence>
<evidence type="ECO:0000269" key="13">
    <source>
    </source>
</evidence>
<evidence type="ECO:0000269" key="14">
    <source>
    </source>
</evidence>
<evidence type="ECO:0000269" key="15">
    <source>
    </source>
</evidence>
<evidence type="ECO:0000269" key="16">
    <source>
    </source>
</evidence>
<evidence type="ECO:0000269" key="17">
    <source>
    </source>
</evidence>
<evidence type="ECO:0000269" key="18">
    <source>
    </source>
</evidence>
<evidence type="ECO:0000269" key="19">
    <source>
    </source>
</evidence>
<evidence type="ECO:0000269" key="20">
    <source>
    </source>
</evidence>
<evidence type="ECO:0000269" key="21">
    <source>
    </source>
</evidence>
<evidence type="ECO:0000269" key="22">
    <source>
    </source>
</evidence>
<evidence type="ECO:0000269" key="23">
    <source>
    </source>
</evidence>
<evidence type="ECO:0000269" key="24">
    <source>
    </source>
</evidence>
<evidence type="ECO:0000269" key="25">
    <source>
    </source>
</evidence>
<evidence type="ECO:0000269" key="26">
    <source>
    </source>
</evidence>
<evidence type="ECO:0000269" key="27">
    <source>
    </source>
</evidence>
<evidence type="ECO:0000269" key="28">
    <source>
    </source>
</evidence>
<evidence type="ECO:0000269" key="29">
    <source>
    </source>
</evidence>
<evidence type="ECO:0000269" key="30">
    <source>
    </source>
</evidence>
<evidence type="ECO:0000269" key="31">
    <source>
    </source>
</evidence>
<evidence type="ECO:0000269" key="32">
    <source>
    </source>
</evidence>
<evidence type="ECO:0000269" key="33">
    <source>
    </source>
</evidence>
<evidence type="ECO:0000269" key="34">
    <source>
    </source>
</evidence>
<evidence type="ECO:0000269" key="35">
    <source>
    </source>
</evidence>
<evidence type="ECO:0000269" key="36">
    <source>
    </source>
</evidence>
<evidence type="ECO:0000269" key="37">
    <source>
    </source>
</evidence>
<evidence type="ECO:0000303" key="38">
    <source>
    </source>
</evidence>
<evidence type="ECO:0000303" key="39">
    <source>
    </source>
</evidence>
<evidence type="ECO:0000303" key="40">
    <source>
    </source>
</evidence>
<evidence type="ECO:0000303" key="41">
    <source>
    </source>
</evidence>
<evidence type="ECO:0000303" key="42">
    <source ref="3"/>
</evidence>
<evidence type="ECO:0000305" key="43"/>
<evidence type="ECO:0000312" key="44">
    <source>
        <dbReference type="HGNC" id="HGNC:16262"/>
    </source>
</evidence>
<evidence type="ECO:0007744" key="45">
    <source>
        <dbReference type="PDB" id="2LAW"/>
    </source>
</evidence>
<evidence type="ECO:0007744" key="46">
    <source>
        <dbReference type="PDB" id="2LAX"/>
    </source>
</evidence>
<evidence type="ECO:0007744" key="47">
    <source>
        <dbReference type="PDB" id="2LAY"/>
    </source>
</evidence>
<evidence type="ECO:0007744" key="48">
    <source>
    </source>
</evidence>
<evidence type="ECO:0007744" key="49">
    <source>
    </source>
</evidence>
<evidence type="ECO:0007744" key="50">
    <source>
    </source>
</evidence>
<evidence type="ECO:0007744" key="51">
    <source>
    </source>
</evidence>
<evidence type="ECO:0007744" key="52">
    <source>
    </source>
</evidence>
<evidence type="ECO:0007744" key="53">
    <source>
    </source>
</evidence>
<evidence type="ECO:0007829" key="54">
    <source>
        <dbReference type="PDB" id="1K9Q"/>
    </source>
</evidence>
<evidence type="ECO:0007829" key="55">
    <source>
        <dbReference type="PDB" id="2LAW"/>
    </source>
</evidence>
<evidence type="ECO:0007829" key="56">
    <source>
        <dbReference type="PDB" id="4REX"/>
    </source>
</evidence>
<evidence type="ECO:0007829" key="57">
    <source>
        <dbReference type="PDB" id="5YDY"/>
    </source>
</evidence>
<evidence type="ECO:0007829" key="58">
    <source>
        <dbReference type="PDB" id="6GEI"/>
    </source>
</evidence>
<evidence type="ECO:0007829" key="59">
    <source>
        <dbReference type="PDB" id="8A8Q"/>
    </source>
</evidence>
<reference key="1">
    <citation type="journal article" date="1995" name="J. Biol. Chem.">
        <title>Characterization of the mammalian YAP (Yes-associated protein) gene and its role in defining a novel protein module, the WW domain.</title>
        <authorList>
            <person name="Sudol M."/>
            <person name="Bork P."/>
            <person name="Einbond A."/>
            <person name="Kastury K."/>
            <person name="Druck T."/>
            <person name="Negrini M."/>
            <person name="Huebner K."/>
            <person name="Lehman D."/>
        </authorList>
    </citation>
    <scope>NUCLEOTIDE SEQUENCE [GENOMIC DNA]</scope>
    <scope>TISSUE SPECIFICITY</scope>
    <source>
        <tissue>Lung</tissue>
    </source>
</reference>
<reference key="2">
    <citation type="journal article" date="2003" name="J. Biol. Chem.">
        <title>WW domain-containing protein YAP associates with ErbB-4 and acts as a co-transcriptional activator for the carboxyl-terminal fragment of ErbB-4 that translocates to the nucleus.</title>
        <authorList>
            <person name="Komuro A."/>
            <person name="Nagai M."/>
            <person name="Navin N.E."/>
            <person name="Sudol M."/>
        </authorList>
    </citation>
    <scope>NUCLEOTIDE SEQUENCE [MRNA] (ISOFORM 2)</scope>
    <scope>FUNCTION</scope>
    <scope>INTERACTION WITH ERBB4</scope>
    <scope>MUTAGENESIS OF SER-127; TRP-199 AND PRO-202</scope>
</reference>
<reference key="3">
    <citation type="submission" date="2010-06" db="EMBL/GenBank/DDBJ databases">
        <title>YAP is a candidate oncogene for esophageal squamous-cell carcinoma.</title>
        <authorList>
            <person name="Inazawa J."/>
            <person name="Imoto I."/>
            <person name="Muramatsu T."/>
        </authorList>
    </citation>
    <scope>NUCLEOTIDE SEQUENCE [MRNA] (ISOFORMS 1 AND 6)</scope>
    <source>
        <tissue>Esophagus</tissue>
    </source>
</reference>
<reference key="4">
    <citation type="journal article" date="2004" name="Nat. Genet.">
        <title>Complete sequencing and characterization of 21,243 full-length human cDNAs.</title>
        <authorList>
            <person name="Ota T."/>
            <person name="Suzuki Y."/>
            <person name="Nishikawa T."/>
            <person name="Otsuki T."/>
            <person name="Sugiyama T."/>
            <person name="Irie R."/>
            <person name="Wakamatsu A."/>
            <person name="Hayashi K."/>
            <person name="Sato H."/>
            <person name="Nagai K."/>
            <person name="Kimura K."/>
            <person name="Makita H."/>
            <person name="Sekine M."/>
            <person name="Obayashi M."/>
            <person name="Nishi T."/>
            <person name="Shibahara T."/>
            <person name="Tanaka T."/>
            <person name="Ishii S."/>
            <person name="Yamamoto J."/>
            <person name="Saito K."/>
            <person name="Kawai Y."/>
            <person name="Isono Y."/>
            <person name="Nakamura Y."/>
            <person name="Nagahari K."/>
            <person name="Murakami K."/>
            <person name="Yasuda T."/>
            <person name="Iwayanagi T."/>
            <person name="Wagatsuma M."/>
            <person name="Shiratori A."/>
            <person name="Sudo H."/>
            <person name="Hosoiri T."/>
            <person name="Kaku Y."/>
            <person name="Kodaira H."/>
            <person name="Kondo H."/>
            <person name="Sugawara M."/>
            <person name="Takahashi M."/>
            <person name="Kanda K."/>
            <person name="Yokoi T."/>
            <person name="Furuya T."/>
            <person name="Kikkawa E."/>
            <person name="Omura Y."/>
            <person name="Abe K."/>
            <person name="Kamihara K."/>
            <person name="Katsuta N."/>
            <person name="Sato K."/>
            <person name="Tanikawa M."/>
            <person name="Yamazaki M."/>
            <person name="Ninomiya K."/>
            <person name="Ishibashi T."/>
            <person name="Yamashita H."/>
            <person name="Murakawa K."/>
            <person name="Fujimori K."/>
            <person name="Tanai H."/>
            <person name="Kimata M."/>
            <person name="Watanabe M."/>
            <person name="Hiraoka S."/>
            <person name="Chiba Y."/>
            <person name="Ishida S."/>
            <person name="Ono Y."/>
            <person name="Takiguchi S."/>
            <person name="Watanabe S."/>
            <person name="Yosida M."/>
            <person name="Hotuta T."/>
            <person name="Kusano J."/>
            <person name="Kanehori K."/>
            <person name="Takahashi-Fujii A."/>
            <person name="Hara H."/>
            <person name="Tanase T.-O."/>
            <person name="Nomura Y."/>
            <person name="Togiya S."/>
            <person name="Komai F."/>
            <person name="Hara R."/>
            <person name="Takeuchi K."/>
            <person name="Arita M."/>
            <person name="Imose N."/>
            <person name="Musashino K."/>
            <person name="Yuuki H."/>
            <person name="Oshima A."/>
            <person name="Sasaki N."/>
            <person name="Aotsuka S."/>
            <person name="Yoshikawa Y."/>
            <person name="Matsunawa H."/>
            <person name="Ichihara T."/>
            <person name="Shiohata N."/>
            <person name="Sano S."/>
            <person name="Moriya S."/>
            <person name="Momiyama H."/>
            <person name="Satoh N."/>
            <person name="Takami S."/>
            <person name="Terashima Y."/>
            <person name="Suzuki O."/>
            <person name="Nakagawa S."/>
            <person name="Senoh A."/>
            <person name="Mizoguchi H."/>
            <person name="Goto Y."/>
            <person name="Shimizu F."/>
            <person name="Wakebe H."/>
            <person name="Hishigaki H."/>
            <person name="Watanabe T."/>
            <person name="Sugiyama A."/>
            <person name="Takemoto M."/>
            <person name="Kawakami B."/>
            <person name="Yamazaki M."/>
            <person name="Watanabe K."/>
            <person name="Kumagai A."/>
            <person name="Itakura S."/>
            <person name="Fukuzumi Y."/>
            <person name="Fujimori Y."/>
            <person name="Komiyama M."/>
            <person name="Tashiro H."/>
            <person name="Tanigami A."/>
            <person name="Fujiwara T."/>
            <person name="Ono T."/>
            <person name="Yamada K."/>
            <person name="Fujii Y."/>
            <person name="Ozaki K."/>
            <person name="Hirao M."/>
            <person name="Ohmori Y."/>
            <person name="Kawabata A."/>
            <person name="Hikiji T."/>
            <person name="Kobatake N."/>
            <person name="Inagaki H."/>
            <person name="Ikema Y."/>
            <person name="Okamoto S."/>
            <person name="Okitani R."/>
            <person name="Kawakami T."/>
            <person name="Noguchi S."/>
            <person name="Itoh T."/>
            <person name="Shigeta K."/>
            <person name="Senba T."/>
            <person name="Matsumura K."/>
            <person name="Nakajima Y."/>
            <person name="Mizuno T."/>
            <person name="Morinaga M."/>
            <person name="Sasaki M."/>
            <person name="Togashi T."/>
            <person name="Oyama M."/>
            <person name="Hata H."/>
            <person name="Watanabe M."/>
            <person name="Komatsu T."/>
            <person name="Mizushima-Sugano J."/>
            <person name="Satoh T."/>
            <person name="Shirai Y."/>
            <person name="Takahashi Y."/>
            <person name="Nakagawa K."/>
            <person name="Okumura K."/>
            <person name="Nagase T."/>
            <person name="Nomura N."/>
            <person name="Kikuchi H."/>
            <person name="Masuho Y."/>
            <person name="Yamashita R."/>
            <person name="Nakai K."/>
            <person name="Yada T."/>
            <person name="Nakamura Y."/>
            <person name="Ohara O."/>
            <person name="Isogai T."/>
            <person name="Sugano S."/>
        </authorList>
    </citation>
    <scope>NUCLEOTIDE SEQUENCE [LARGE SCALE MRNA] (ISOFORM 4)</scope>
    <source>
        <tissue>Placenta</tissue>
        <tissue>Thalamus</tissue>
    </source>
</reference>
<reference key="5">
    <citation type="journal article" date="2006" name="Nature">
        <title>Human chromosome 11 DNA sequence and analysis including novel gene identification.</title>
        <authorList>
            <person name="Taylor T.D."/>
            <person name="Noguchi H."/>
            <person name="Totoki Y."/>
            <person name="Toyoda A."/>
            <person name="Kuroki Y."/>
            <person name="Dewar K."/>
            <person name="Lloyd C."/>
            <person name="Itoh T."/>
            <person name="Takeda T."/>
            <person name="Kim D.-W."/>
            <person name="She X."/>
            <person name="Barlow K.F."/>
            <person name="Bloom T."/>
            <person name="Bruford E."/>
            <person name="Chang J.L."/>
            <person name="Cuomo C.A."/>
            <person name="Eichler E."/>
            <person name="FitzGerald M.G."/>
            <person name="Jaffe D.B."/>
            <person name="LaButti K."/>
            <person name="Nicol R."/>
            <person name="Park H.-S."/>
            <person name="Seaman C."/>
            <person name="Sougnez C."/>
            <person name="Yang X."/>
            <person name="Zimmer A.R."/>
            <person name="Zody M.C."/>
            <person name="Birren B.W."/>
            <person name="Nusbaum C."/>
            <person name="Fujiyama A."/>
            <person name="Hattori M."/>
            <person name="Rogers J."/>
            <person name="Lander E.S."/>
            <person name="Sakaki Y."/>
        </authorList>
    </citation>
    <scope>NUCLEOTIDE SEQUENCE [LARGE SCALE GENOMIC DNA]</scope>
</reference>
<reference key="6">
    <citation type="submission" date="2005-07" db="EMBL/GenBank/DDBJ databases">
        <authorList>
            <person name="Mural R.J."/>
            <person name="Istrail S."/>
            <person name="Sutton G.G."/>
            <person name="Florea L."/>
            <person name="Halpern A.L."/>
            <person name="Mobarry C.M."/>
            <person name="Lippert R."/>
            <person name="Walenz B."/>
            <person name="Shatkay H."/>
            <person name="Dew I."/>
            <person name="Miller J.R."/>
            <person name="Flanigan M.J."/>
            <person name="Edwards N.J."/>
            <person name="Bolanos R."/>
            <person name="Fasulo D."/>
            <person name="Halldorsson B.V."/>
            <person name="Hannenhalli S."/>
            <person name="Turner R."/>
            <person name="Yooseph S."/>
            <person name="Lu F."/>
            <person name="Nusskern D.R."/>
            <person name="Shue B.C."/>
            <person name="Zheng X.H."/>
            <person name="Zhong F."/>
            <person name="Delcher A.L."/>
            <person name="Huson D.H."/>
            <person name="Kravitz S.A."/>
            <person name="Mouchard L."/>
            <person name="Reinert K."/>
            <person name="Remington K.A."/>
            <person name="Clark A.G."/>
            <person name="Waterman M.S."/>
            <person name="Eichler E.E."/>
            <person name="Adams M.D."/>
            <person name="Hunkapiller M.W."/>
            <person name="Myers E.W."/>
            <person name="Venter J.C."/>
        </authorList>
    </citation>
    <scope>NUCLEOTIDE SEQUENCE [LARGE SCALE GENOMIC DNA]</scope>
</reference>
<reference key="7">
    <citation type="journal article" date="2004" name="Genome Res.">
        <title>The status, quality, and expansion of the NIH full-length cDNA project: the Mammalian Gene Collection (MGC).</title>
        <authorList>
            <consortium name="The MGC Project Team"/>
        </authorList>
    </citation>
    <scope>NUCLEOTIDE SEQUENCE [LARGE SCALE MRNA] (ISOFORM 1)</scope>
    <source>
        <tissue>Pancreas</tissue>
    </source>
</reference>
<reference key="8">
    <citation type="journal article" date="2012" name="Gene">
        <title>Identification, basic characterization and evolutionary analysis of differentially spliced mRNA isoforms of human YAP1 gene.</title>
        <authorList>
            <person name="Gaffney C.J."/>
            <person name="Oka T."/>
            <person name="Mazack V."/>
            <person name="Hilman D."/>
            <person name="Gat U."/>
            <person name="Muramatsu T."/>
            <person name="Inazawa J."/>
            <person name="Golden A."/>
            <person name="Carey D.J."/>
            <person name="Farooq A."/>
            <person name="Tromp G."/>
            <person name="Sudol M."/>
        </authorList>
    </citation>
    <scope>NUCLEOTIDE SEQUENCE [MRNA] OF 206-369 (ISOFORMS 3; 7; 8 AND 9)</scope>
    <scope>ALTERNATIVE SPLICING</scope>
    <source>
        <tissue>Pancreas</tissue>
    </source>
</reference>
<reference key="9">
    <citation type="journal article" date="1997" name="J. Biol. Chem.">
        <title>Characterization of the WW domain of human Yes-associated protein and its polyproline containing ligands.</title>
        <authorList>
            <person name="Chen H.I."/>
            <person name="Einbond A."/>
            <person name="Kwak S.-J."/>
            <person name="Linn H."/>
            <person name="Koepf E."/>
            <person name="Peterson S."/>
            <person name="Kelly J.W."/>
            <person name="Sudol M."/>
        </authorList>
    </citation>
    <scope>INTERACTION WITH WBP1 AND WBP2</scope>
</reference>
<reference key="10">
    <citation type="journal article" date="2006" name="Cell">
        <title>Global, in vivo, and site-specific phosphorylation dynamics in signaling networks.</title>
        <authorList>
            <person name="Olsen J.V."/>
            <person name="Blagoev B."/>
            <person name="Gnad F."/>
            <person name="Macek B."/>
            <person name="Kumar C."/>
            <person name="Mortensen P."/>
            <person name="Mann M."/>
        </authorList>
    </citation>
    <scope>IDENTIFICATION BY MASS SPECTROMETRY [LARGE SCALE ANALYSIS]</scope>
    <source>
        <tissue>Cervix carcinoma</tissue>
    </source>
</reference>
<reference key="11">
    <citation type="journal article" date="2006" name="J. Cell Biol.">
        <title>Transcriptional repression induces a slowly progressive atypical neuronal death associated with changes of YAP isoforms and p73.</title>
        <authorList>
            <person name="Hoshino M."/>
            <person name="Qi M.-L."/>
            <person name="Yoshimura N."/>
            <person name="Tagawa K."/>
            <person name="Wada Y.-I."/>
            <person name="Enokido Y."/>
            <person name="Marubuchi S."/>
            <person name="Harjes P."/>
            <person name="Arai N."/>
            <person name="Oyanagi K."/>
            <person name="Blandino G."/>
            <person name="Sudol M."/>
            <person name="Rich T."/>
            <person name="Kanazawa I."/>
            <person name="Wanker E.E."/>
            <person name="Saitoe M."/>
            <person name="Okazawa H."/>
        </authorList>
    </citation>
    <scope>IDENTIFICATION OF ISOFORMS LACKING THE TRANSCRIPTIONAL ACTIVATION DOMAIN</scope>
    <scope>TISSUE SPECIFICITY</scope>
</reference>
<reference key="12">
    <citation type="journal article" date="2006" name="Mol. Endocrinol.">
        <title>WW domain binding protein-2, an E6-associated protein interacting protein, acts as a coactivator of estrogen and progesterone receptors.</title>
        <authorList>
            <person name="Dhananjayan S.C."/>
            <person name="Ramamoorthy S."/>
            <person name="Khan O.Y."/>
            <person name="Ismail A."/>
            <person name="Sun J."/>
            <person name="Slingerland J."/>
            <person name="O'Malley B.W."/>
            <person name="Nawaz Z."/>
        </authorList>
    </citation>
    <scope>FUNCTION</scope>
</reference>
<reference key="13">
    <citation type="journal article" date="2007" name="BMC Mol. Biol.">
        <title>Regulation of p73 by Hck through kinase-dependent and independent mechanisms.</title>
        <authorList>
            <person name="Paliwal P."/>
            <person name="Radha V."/>
            <person name="Swarup G."/>
        </authorList>
    </citation>
    <scope>INTERACTION WITH HCK</scope>
</reference>
<reference key="14">
    <citation type="journal article" date="2007" name="Genes Dev.">
        <title>Inactivation of YAP oncoprotein by the Hippo pathway is involved in cell contact inhibition and tissue growth control.</title>
        <authorList>
            <person name="Zhao B."/>
            <person name="Wei X."/>
            <person name="Li W."/>
            <person name="Udan R.S."/>
            <person name="Yang Q."/>
            <person name="Kim J."/>
            <person name="Xie J."/>
            <person name="Ikenoue T."/>
            <person name="Yu J."/>
            <person name="Li L."/>
            <person name="Zheng P."/>
            <person name="Ye K."/>
            <person name="Chinnaiyan A."/>
            <person name="Halder G."/>
            <person name="Lai Z.C."/>
            <person name="Guan K.L."/>
        </authorList>
    </citation>
    <scope>FUNCTION</scope>
    <scope>SUBCELLULAR LOCATION</scope>
    <scope>INTERACTION WITH YWHAB</scope>
    <scope>PHOSPHORYLATION AT SER-61; SER-109; SER-127; SER-164 AND SER-397</scope>
    <scope>MUTAGENESIS OF HIS-122; SER-127 AND PRO-129</scope>
    <scope>TISSUE SPECIFICITY</scope>
</reference>
<reference key="15">
    <citation type="journal article" date="2007" name="Proc. Natl. Acad. Sci. U.S.A.">
        <title>Proline-rich Gla protein 2 is a cell-surface vitamin K-dependent protein that binds to the transcriptional coactivator Yes-associated protein.</title>
        <authorList>
            <person name="Kulman J.D."/>
            <person name="Harris J.E."/>
            <person name="Xie L."/>
            <person name="Davie E.W."/>
        </authorList>
    </citation>
    <scope>INTERACTION WITH PRRG2</scope>
</reference>
<reference key="16">
    <citation type="journal article" date="2007" name="Science">
        <title>ATM and ATR substrate analysis reveals extensive protein networks responsive to DNA damage.</title>
        <authorList>
            <person name="Matsuoka S."/>
            <person name="Ballif B.A."/>
            <person name="Smogorzewska A."/>
            <person name="McDonald E.R. III"/>
            <person name="Hurov K.E."/>
            <person name="Luo J."/>
            <person name="Bakalarski C.E."/>
            <person name="Zhao Z."/>
            <person name="Solimini N."/>
            <person name="Lerenthal Y."/>
            <person name="Shiloh Y."/>
            <person name="Gygi S.P."/>
            <person name="Elledge S.J."/>
        </authorList>
    </citation>
    <scope>PHOSPHORYLATION [LARGE SCALE ANALYSIS] AT SER-371</scope>
    <scope>IDENTIFICATION BY MASS SPECTROMETRY [LARGE SCALE ANALYSIS]</scope>
    <source>
        <tissue>Embryonic kidney</tissue>
    </source>
</reference>
<reference key="17">
    <citation type="journal article" date="2008" name="Genes Dev.">
        <title>TEAD mediates YAP-dependent gene induction and growth control.</title>
        <authorList>
            <person name="Zhao B."/>
            <person name="Ye X."/>
            <person name="Yu J."/>
            <person name="Li L."/>
            <person name="Li W."/>
            <person name="Li S."/>
            <person name="Yu J."/>
            <person name="Lin J.D."/>
            <person name="Wang C.Y."/>
            <person name="Chinnaiyan A.M."/>
            <person name="Lai Z.C."/>
            <person name="Guan K.L."/>
        </authorList>
    </citation>
    <scope>FUNCTION</scope>
    <scope>INTERACTION WITH TEAD1; TEAD2; TEAD3 AND TEAD4</scope>
    <scope>MUTAGENESIS OF SER-94</scope>
</reference>
<reference key="18">
    <citation type="journal article" date="2008" name="J. Biol. Chem.">
        <title>Tumor suppressor LATS1 is a negative regulator of oncogene YAP.</title>
        <authorList>
            <person name="Hao Y."/>
            <person name="Chun A."/>
            <person name="Cheung K."/>
            <person name="Rashidi B."/>
            <person name="Yang X."/>
        </authorList>
    </citation>
    <scope>FUNCTION</scope>
    <scope>SUBCELLULAR LOCATION</scope>
    <scope>INTERACTION WITH LATS1 AND LATS2</scope>
    <scope>PHOSPHORYLATION AT SER-61; SER-109; SER-127; SER-164 AND SER-397</scope>
    <scope>MUTAGENESIS OF HIS-122; ARG-124; SER-127 AND SER-397</scope>
</reference>
<reference key="19">
    <citation type="journal article" date="2008" name="Mol. Cell">
        <title>Yap1 phosphorylation by c-Abl is a critical step in selective activation of proapoptotic genes in response to DNA damage.</title>
        <authorList>
            <person name="Levy D."/>
            <person name="Adamovich Y."/>
            <person name="Reuven N."/>
            <person name="Shaul Y."/>
        </authorList>
    </citation>
    <scope>FUNCTION</scope>
    <scope>PHOSPHORYLATION AT TYR-407 BY ABL1</scope>
    <scope>MUTAGENESIS OF TYR-407</scope>
    <scope>SUBCELLULAR LOCATION</scope>
    <scope>INTERACTION WITH RUNX1 AND TP73</scope>
</reference>
<reference key="20">
    <citation type="journal article" date="2008" name="Proc. Natl. Acad. Sci. U.S.A.">
        <title>A quantitative atlas of mitotic phosphorylation.</title>
        <authorList>
            <person name="Dephoure N."/>
            <person name="Zhou C."/>
            <person name="Villen J."/>
            <person name="Beausoleil S.A."/>
            <person name="Bakalarski C.E."/>
            <person name="Elledge S.J."/>
            <person name="Gygi S.P."/>
        </authorList>
    </citation>
    <scope>PHOSPHORYLATION [LARGE SCALE ANALYSIS] AT SER-61; SER-127; SER-131; SER-138; THR-154; SER-274; SER-289 AND SER-367</scope>
    <scope>IDENTIFICATION BY MASS SPECTROMETRY [LARGE SCALE ANALYSIS]</scope>
    <source>
        <tissue>Cervix carcinoma</tissue>
    </source>
</reference>
<reference key="21">
    <citation type="journal article" date="2009" name="Anal. Chem.">
        <title>Lys-N and trypsin cover complementary parts of the phosphoproteome in a refined SCX-based approach.</title>
        <authorList>
            <person name="Gauci S."/>
            <person name="Helbig A.O."/>
            <person name="Slijper M."/>
            <person name="Krijgsveld J."/>
            <person name="Heck A.J."/>
            <person name="Mohammed S."/>
        </authorList>
    </citation>
    <scope>IDENTIFICATION BY MASS SPECTROMETRY [LARGE SCALE ANALYSIS]</scope>
</reference>
<reference key="22">
    <citation type="journal article" date="2009" name="Sci. Signal.">
        <title>Quantitative phosphoproteomic analysis of T cell receptor signaling reveals system-wide modulation of protein-protein interactions.</title>
        <authorList>
            <person name="Mayya V."/>
            <person name="Lundgren D.H."/>
            <person name="Hwang S.-I."/>
            <person name="Rezaul K."/>
            <person name="Wu L."/>
            <person name="Eng J.K."/>
            <person name="Rodionov V."/>
            <person name="Han D.K."/>
        </authorList>
    </citation>
    <scope>IDENTIFICATION BY MASS SPECTROMETRY [LARGE SCALE ANALYSIS]</scope>
    <source>
        <tissue>Leukemic T-cell</tissue>
    </source>
</reference>
<reference key="23">
    <citation type="journal article" date="2010" name="Cell Death Dis.">
        <title>JNK phosphorylates Yes-associated protein (YAP) to regulate apoptosis.</title>
        <authorList>
            <person name="Tomlinson V."/>
            <person name="Gudmundsdottir K."/>
            <person name="Luong P."/>
            <person name="Leung K.Y."/>
            <person name="Knebel A."/>
            <person name="Basu S."/>
        </authorList>
    </citation>
    <scope>PHOSPHORYLATION AT THR-119; SER-138; THR-154; SER-367 AND THR-412 BY MAPK8/JNK1 AND MAPK9/JNK2</scope>
    <scope>FUNCTION</scope>
</reference>
<reference key="24">
    <citation type="journal article" date="2010" name="Dev. Cell">
        <title>The Crumbs complex couples cell density sensing to Hippo-dependent control of the TGF-beta-SMAD pathway.</title>
        <authorList>
            <person name="Varelas X."/>
            <person name="Samavarchi-Tehrani P."/>
            <person name="Narimatsu M."/>
            <person name="Weiss A."/>
            <person name="Cockburn K."/>
            <person name="Larsen B.G."/>
            <person name="Rossant J."/>
            <person name="Wrana J.L."/>
        </authorList>
    </citation>
    <scope>SUBCELLULAR LOCATION</scope>
</reference>
<reference key="25">
    <citation type="journal article" date="2010" name="Genes Dev.">
        <title>A coordinated phosphorylation by Lats and CK1 regulates YAP stability through SCF(beta-TRCP).</title>
        <authorList>
            <person name="Zhao B."/>
            <person name="Li L."/>
            <person name="Tumaneng K."/>
            <person name="Wang C.-Y."/>
            <person name="Guan K.-L."/>
        </authorList>
    </citation>
    <scope>PHOSPHORYLATION AT SER-400 AND SER-403 BY CSNK1D/CK1</scope>
    <scope>PHOSPHORYLATION AT SER-127 AND SER-397 BY LATS PROTEINS</scope>
    <scope>UBIQUITINATION BY SCF(BETA-TRCP)</scope>
    <scope>SUBCELLULAR LOCATION</scope>
    <scope>MUTAGENESIS OF SER-61; SER-109; SER-127 AND SER-164</scope>
</reference>
<reference key="26">
    <citation type="journal article" date="2010" name="Genes Dev.">
        <title>Structural basis of YAP recognition by TEAD4 in the hippo pathway.</title>
        <authorList>
            <person name="Chen L."/>
            <person name="Chan S.W."/>
            <person name="Zhang X."/>
            <person name="Walsh M."/>
            <person name="Lim C.J."/>
            <person name="Hong W."/>
            <person name="Song H."/>
        </authorList>
    </citation>
    <scope>INTERACTION WITH TEAD4</scope>
    <scope>MUTAGENESIS OF VAL-80; VAL-84 AND PRO-85</scope>
</reference>
<reference key="27">
    <citation type="journal article" date="2010" name="Sci. Signal.">
        <title>Quantitative phosphoproteomics reveals widespread full phosphorylation site occupancy during mitosis.</title>
        <authorList>
            <person name="Olsen J.V."/>
            <person name="Vermeulen M."/>
            <person name="Santamaria A."/>
            <person name="Kumar C."/>
            <person name="Miller M.L."/>
            <person name="Jensen L.J."/>
            <person name="Gnad F."/>
            <person name="Cox J."/>
            <person name="Jensen T.S."/>
            <person name="Nigg E.A."/>
            <person name="Brunak S."/>
            <person name="Mann M."/>
        </authorList>
    </citation>
    <scope>PHOSPHORYLATION [LARGE SCALE ANALYSIS] AT SER-61; THR-63; SER-109; THR-119; SER-138; SER-274; SER-289 AND SER-367</scope>
    <scope>IDENTIFICATION BY MASS SPECTROMETRY [LARGE SCALE ANALYSIS]</scope>
    <source>
        <tissue>Cervix carcinoma</tissue>
    </source>
</reference>
<reference key="28">
    <citation type="journal article" date="2011" name="Genes Dev.">
        <title>Angiomotin is a novel Hippo pathway component that inhibits YAP oncoprotein.</title>
        <authorList>
            <person name="Zhao B."/>
            <person name="Li L."/>
            <person name="Lu Q."/>
            <person name="Wang L.H."/>
            <person name="Liu C.Y."/>
            <person name="Lei Q."/>
            <person name="Guan K.L."/>
        </authorList>
    </citation>
    <scope>INTERACTION WITH AMOT AND AMOTL2</scope>
    <scope>SUBCELLULAR LOCATION</scope>
</reference>
<reference key="29">
    <citation type="journal article" date="2011" name="BMC Syst. Biol.">
        <title>Initial characterization of the human central proteome.</title>
        <authorList>
            <person name="Burkard T.R."/>
            <person name="Planyavsky M."/>
            <person name="Kaupe I."/>
            <person name="Breitwieser F.P."/>
            <person name="Buerckstuemmer T."/>
            <person name="Bennett K.L."/>
            <person name="Superti-Furga G."/>
            <person name="Colinge J."/>
        </authorList>
    </citation>
    <scope>IDENTIFICATION BY MASS SPECTROMETRY [LARGE SCALE ANALYSIS]</scope>
</reference>
<reference key="30">
    <citation type="journal article" date="2011" name="Sci. Signal.">
        <title>System-wide temporal characterization of the proteome and phosphoproteome of human embryonic stem cell differentiation.</title>
        <authorList>
            <person name="Rigbolt K.T."/>
            <person name="Prokhorova T.A."/>
            <person name="Akimov V."/>
            <person name="Henningsen J."/>
            <person name="Johansen P.T."/>
            <person name="Kratchmarova I."/>
            <person name="Kassem M."/>
            <person name="Mann M."/>
            <person name="Olsen J.V."/>
            <person name="Blagoev B."/>
        </authorList>
    </citation>
    <scope>PHOSPHORYLATION [LARGE SCALE ANALYSIS] AT SER-61; SER-289 AND SER-367</scope>
    <scope>IDENTIFICATION BY MASS SPECTROMETRY [LARGE SCALE ANALYSIS]</scope>
</reference>
<reference key="31">
    <citation type="journal article" date="2013" name="J. Biol. Chem.">
        <title>Cellular localization and characterization of cytosolic binding partners for Gla domain-containing proteins PRRG4 and PRRG2.</title>
        <authorList>
            <person name="Yazicioglu M.N."/>
            <person name="Monaldini L."/>
            <person name="Chu K."/>
            <person name="Khazi F.R."/>
            <person name="Murphy S.L."/>
            <person name="Huang H."/>
            <person name="Margaritis P."/>
            <person name="High K.A."/>
        </authorList>
    </citation>
    <scope>INTERACTION WITH PRRG4</scope>
    <scope>MUTAGENESIS OF TRP-199; PRO-202; SER-217; TRP-258 AND PRO-261</scope>
</reference>
<reference key="32">
    <citation type="journal article" date="2013" name="J. Proteome Res.">
        <title>Toward a comprehensive characterization of a human cancer cell phosphoproteome.</title>
        <authorList>
            <person name="Zhou H."/>
            <person name="Di Palma S."/>
            <person name="Preisinger C."/>
            <person name="Peng M."/>
            <person name="Polat A.N."/>
            <person name="Heck A.J."/>
            <person name="Mohammed S."/>
        </authorList>
    </citation>
    <scope>PHOSPHORYLATION [LARGE SCALE ANALYSIS] AT SER-61; SER-109; THR-119; SER-289; SER-381; SER-382 AND SER-388</scope>
    <scope>IDENTIFICATION BY MASS SPECTROMETRY [LARGE SCALE ANALYSIS]</scope>
    <source>
        <tissue>Cervix carcinoma</tissue>
    </source>
</reference>
<reference key="33">
    <citation type="journal article" date="2013" name="Oncogene">
        <title>PTPN14 interacts with and negatively regulates the oncogenic function of YAP.</title>
        <authorList>
            <person name="Liu X."/>
            <person name="Yang N."/>
            <person name="Figel S.A."/>
            <person name="Wilson K.E."/>
            <person name="Morrison C.D."/>
            <person name="Gelman I.H."/>
            <person name="Zhang J."/>
        </authorList>
    </citation>
    <scope>INTERACTION WITH PTPN14</scope>
    <scope>SUBCELLULAR LOCATION</scope>
</reference>
<reference key="34">
    <citation type="journal article" date="2014" name="Am. J. Hum. Genet.">
        <title>Heterozygous loss-of-function mutations in YAP1 cause both isolated and syndromic optic fissure closure defects.</title>
        <authorList>
            <consortium name="UK10K Consortium"/>
            <person name="Williamson K.A."/>
            <person name="Rainger J."/>
            <person name="Floyd J.A."/>
            <person name="Ansari M."/>
            <person name="Meynert A."/>
            <person name="Aldridge K.V."/>
            <person name="Rainger J.K."/>
            <person name="Anderson C.A."/>
            <person name="Moore A.T."/>
            <person name="Hurles M.E."/>
            <person name="Clarke A."/>
            <person name="van Heyningen V."/>
            <person name="Verloes A."/>
            <person name="Taylor M.S."/>
            <person name="Wilkie A.O."/>
            <person name="Fitzpatrick D.R."/>
            <person name="Hurles M."/>
            <person name="FitzPatrick D.R."/>
            <person name="Al-Turki S."/>
            <person name="Anderson C."/>
            <person name="Barroso I."/>
            <person name="Beales P."/>
            <person name="Bentham J."/>
            <person name="Bhattacharya S."/>
            <person name="Carss K."/>
            <person name="Chatterjee K."/>
            <person name="Cirak S."/>
            <person name="Cosgrove C."/>
            <person name="Daly A."/>
            <person name="Floyd J."/>
            <person name="Franklin C."/>
            <person name="Futema M."/>
            <person name="Humphries S."/>
            <person name="McCarthy S."/>
            <person name="Mitchison H."/>
            <person name="Muntoni F."/>
            <person name="Onoufriadis A."/>
            <person name="Parker V."/>
            <person name="Payne F."/>
            <person name="Plagnol V."/>
            <person name="Raymond L."/>
            <person name="Savage D."/>
            <person name="Scambler P."/>
            <person name="Schmidts M."/>
            <person name="Semple R."/>
            <person name="Serra E."/>
            <person name="Stalker J."/>
            <person name="van Kogelenberg M."/>
            <person name="Vijayarangakannan P."/>
            <person name="Walter K."/>
            <person name="Wood G."/>
        </authorList>
    </citation>
    <scope>INVOLVEMENT IN COB1</scope>
    <scope>VARIANTS LEU-139; LEU-227; VAL-330 AND GLU-462</scope>
</reference>
<reference key="35">
    <citation type="journal article" date="2014" name="J. Proteomics">
        <title>An enzyme assisted RP-RPLC approach for in-depth analysis of human liver phosphoproteome.</title>
        <authorList>
            <person name="Bian Y."/>
            <person name="Song C."/>
            <person name="Cheng K."/>
            <person name="Dong M."/>
            <person name="Wang F."/>
            <person name="Huang J."/>
            <person name="Sun D."/>
            <person name="Wang L."/>
            <person name="Ye M."/>
            <person name="Zou H."/>
        </authorList>
    </citation>
    <scope>PHOSPHORYLATION [LARGE SCALE ANALYSIS] AT SER-128 AND SER-131</scope>
    <scope>IDENTIFICATION BY MASS SPECTROMETRY [LARGE SCALE ANALYSIS]</scope>
    <source>
        <tissue>Liver</tissue>
    </source>
</reference>
<reference key="36">
    <citation type="journal article" date="2015" name="Nature">
        <title>YAP is essential for tissue tension to ensure vertebrate 3D body shape.</title>
        <authorList>
            <person name="Porazinski S."/>
            <person name="Wang H."/>
            <person name="Asaoka Y."/>
            <person name="Behrndt M."/>
            <person name="Miyamoto T."/>
            <person name="Morita H."/>
            <person name="Hata S."/>
            <person name="Sasaki T."/>
            <person name="Krens S.F."/>
            <person name="Osada Y."/>
            <person name="Asaka S."/>
            <person name="Momoi A."/>
            <person name="Linton S."/>
            <person name="Miesfeld J.B."/>
            <person name="Link B.A."/>
            <person name="Senga T."/>
            <person name="Castillo-Morales A."/>
            <person name="Urrutia A.O."/>
            <person name="Shimizu N."/>
            <person name="Nagase H."/>
            <person name="Matsuura S."/>
            <person name="Bagby S."/>
            <person name="Kondoh H."/>
            <person name="Nishina H."/>
            <person name="Heisenberg C.P."/>
            <person name="Furutani-Seiki M."/>
        </authorList>
    </citation>
    <scope>FUNCTION</scope>
</reference>
<reference key="37">
    <citation type="journal article" date="2015" name="Nat. Commun.">
        <title>Actin remodelling factors control ciliogenesis by regulating YAP/TAZ activity and vesicle trafficking.</title>
        <authorList>
            <person name="Kim J."/>
            <person name="Jo H."/>
            <person name="Hong H."/>
            <person name="Kim M.H."/>
            <person name="Kim J.M."/>
            <person name="Lee J.K."/>
            <person name="Heo W.D."/>
            <person name="Kim J."/>
        </authorList>
    </citation>
    <scope>FUNCTION</scope>
    <scope>SUBCELLULAR LOCATION</scope>
    <scope>MUTAGENESIS OF SER-94</scope>
</reference>
<reference key="38">
    <citation type="journal article" date="2016" name="EMBO Rep.">
        <title>Role of Angiomotin-like 2 mono-ubiquitination on YAP inhibition.</title>
        <authorList>
            <person name="Kim M."/>
            <person name="Kim M."/>
            <person name="Park S.J."/>
            <person name="Lee C."/>
            <person name="Lim D.S."/>
        </authorList>
    </citation>
    <scope>FUNCTION</scope>
    <scope>INTERACTION WITH AMOTL2</scope>
    <scope>SUBCELLULAR LOCATION</scope>
</reference>
<reference key="39">
    <citation type="journal article" date="2017" name="Sci. Rep.">
        <title>Loss of DLG5 promotes breast cancer malignancy by inhibiting the Hippo signaling pathway.</title>
        <authorList>
            <person name="Liu J."/>
            <person name="Li J."/>
            <person name="Li P."/>
            <person name="Wang Y."/>
            <person name="Liang Z."/>
            <person name="Jiang Y."/>
            <person name="Li J."/>
            <person name="Feng C."/>
            <person name="Wang R."/>
            <person name="Chen H."/>
            <person name="Zhou C."/>
            <person name="Zhang J."/>
            <person name="Yang J."/>
            <person name="Liu P."/>
        </authorList>
    </citation>
    <scope>SUBCELLULAR LOCATION</scope>
    <scope>PHOSPHORYLATION AT SER-127 AND SER-397</scope>
</reference>
<reference key="40">
    <citation type="journal article" date="2018" name="J. Clin. Invest.">
        <title>Claudin-18-mediated YAP activity regulates lung stem and progenitor cell homeostasis and tumorigenesis.</title>
        <authorList>
            <person name="Zhou B."/>
            <person name="Flodby P."/>
            <person name="Luo J."/>
            <person name="Castillo D.R."/>
            <person name="Liu Y."/>
            <person name="Yu F.X."/>
            <person name="McConnell A."/>
            <person name="Varghese B."/>
            <person name="Li G."/>
            <person name="Chimge N.O."/>
            <person name="Sunohara M."/>
            <person name="Koss M.N."/>
            <person name="Elatre W."/>
            <person name="Conti P."/>
            <person name="Liebler J.M."/>
            <person name="Yang C."/>
            <person name="Marconett C.N."/>
            <person name="Laird-Offringa I.A."/>
            <person name="Minoo P."/>
            <person name="Guan K."/>
            <person name="Stripp B.R."/>
            <person name="Crandall E.D."/>
            <person name="Borok Z."/>
        </authorList>
    </citation>
    <scope>SUBCELLULAR LOCATION</scope>
</reference>
<reference key="41">
    <citation type="journal article" date="2018" name="Nat. Commun.">
        <title>Regulation of Yki/Yap subcellular localization and Hpo signaling by a nuclear kinase PRP4K.</title>
        <authorList>
            <person name="Cho Y.S."/>
            <person name="Zhu J."/>
            <person name="Li S."/>
            <person name="Wang B."/>
            <person name="Han Y."/>
            <person name="Jiang J."/>
        </authorList>
    </citation>
    <scope>SUBCELLULAR LOCATION</scope>
    <scope>PHOSPHORYLATION BY PRP4K</scope>
    <scope>MUTAGENESIS OF SER-61; SER-109; SER-127; SER-164 AND SER-397</scope>
</reference>
<reference key="42">
    <citation type="journal article" date="2019" name="Cancer Sci.">
        <title>Identification of genes involved in the regulation of TERT in hepatocellular carcinoma.</title>
        <authorList>
            <person name="Amisaki M."/>
            <person name="Tsuchiya H."/>
            <person name="Sakabe T."/>
            <person name="Fujiwara Y."/>
            <person name="Shiota G."/>
        </authorList>
    </citation>
    <scope>FUNCTION</scope>
    <scope>SUBCELLULAR LOCATION</scope>
</reference>
<reference key="43">
    <citation type="journal article" date="2019" name="Int. J. Mol. Sci.">
        <title>Evidence for the Desmosomal Cadherin Desmoglein-3 in Regulating YAP and Phospho-YAP in Keratinocyte Responses to Mechanical Forces.</title>
        <authorList>
            <person name="Uttagomol J."/>
            <person name="Ahmad U.S."/>
            <person name="Rehman A."/>
            <person name="Huang Y."/>
            <person name="Laly A.C."/>
            <person name="Kang A."/>
            <person name="Soetaert J."/>
            <person name="Chance R."/>
            <person name="Teh M.T."/>
            <person name="Connelly J.T."/>
            <person name="Wan H."/>
        </authorList>
    </citation>
    <scope>IDENTIFICATION IN A COMPLEX WITH DSG3; PKP1 AND YWHAG</scope>
    <scope>INTERACTION WITH DSG3; PKP1 AND YWHAG</scope>
    <scope>SUBCELLULAR LOCATION</scope>
    <scope>INDUCTION</scope>
    <scope>PHOSPHORYLATION AT SER-127</scope>
</reference>
<reference key="44">
    <citation type="journal article" date="2021" name="Life. Sci Alliance">
        <title>AMOTL2 mono-ubiquitination by WWP1 promotes contact inhibition by facilitating LATS activation.</title>
        <authorList>
            <person name="Hwang D."/>
            <person name="Kim M."/>
            <person name="Kim S."/>
            <person name="Kwon M.R."/>
            <person name="Kang Y.S."/>
            <person name="Kim D."/>
            <person name="Kang H.C."/>
            <person name="Lim D.S."/>
        </authorList>
    </citation>
    <scope>FUNCTION</scope>
    <scope>SUBCELLULAR LOCATION</scope>
    <scope>PHOSPHORYLATION AT SER-127</scope>
</reference>
<reference key="45">
    <citation type="journal article" date="2024" name="J. Clin. Invest.">
        <title>The alanyl-tRNA synthetase AARS1 moonlights as a lactyltransferase to promote YAP signaling in gastric cancer.</title>
        <authorList>
            <person name="Ju J."/>
            <person name="Zhang H."/>
            <person name="Lin M."/>
            <person name="Yan Z."/>
            <person name="An L."/>
            <person name="Cao Z."/>
            <person name="Geng D."/>
            <person name="Yue J."/>
            <person name="Tang Y."/>
            <person name="Tian L."/>
            <person name="Chen F."/>
            <person name="Han Y."/>
            <person name="Wang W."/>
            <person name="Zhao S."/>
            <person name="Jiao S."/>
            <person name="Zhou Z."/>
        </authorList>
    </citation>
    <scope>SUBCELLULAR LOCATION</scope>
    <scope>LACTYLATION AT LYS-90</scope>
    <scope>MUTAGENESIS OF LYS-90</scope>
</reference>
<reference key="46">
    <citation type="journal article" date="2001" name="J. Mol. Biol.">
        <title>Solution structures of the YAP65 WW domain and the variant L30 K in complex with the peptides GTPPPPYTVG, N-(n-octyl)-GPPPY and PLPPY and the application of peptide libraries reveal a minimal binding epitope.</title>
        <authorList>
            <person name="Pires J.R."/>
            <person name="Taha-Nejad F."/>
            <person name="Toepert F."/>
            <person name="Ast T."/>
            <person name="Hoffmueller U."/>
            <person name="Schneider-Mergener J."/>
            <person name="Kuehne R."/>
            <person name="Macias M.J."/>
            <person name="Oschkinat H."/>
        </authorList>
    </citation>
    <scope>STRUCTURE BY NMR OF 165-210 OF WILD-TYPE AND MUTANT LYS-190 IN COMPLEX WITH PRO-RICH PEPTIDES</scope>
</reference>
<reference key="47">
    <citation type="journal article" date="2001" name="Proc. Natl. Acad. Sci. U.S.A.">
        <title>Using flexible loop mimetics to extend phi-value analysis to secondary structure interactions.</title>
        <authorList>
            <person name="Ferguson N."/>
            <person name="Pires J.R."/>
            <person name="Toepert F."/>
            <person name="Johnson C.M."/>
            <person name="Pan Y.P."/>
            <person name="Volkmer-Engert R."/>
            <person name="Schneider-Mergener J."/>
            <person name="Daggett V."/>
            <person name="Oschkinat H."/>
            <person name="Fersht A."/>
        </authorList>
    </citation>
    <scope>STRUCTURE BY NMR OF 165-204</scope>
</reference>
<reference key="48">
    <citation type="journal article" date="2010" name="Genes Dev.">
        <title>Structural insights into the YAP and TEAD complex.</title>
        <authorList>
            <person name="Li Z."/>
            <person name="Zhao B."/>
            <person name="Wang P."/>
            <person name="Chen F."/>
            <person name="Dong Z."/>
            <person name="Yang H."/>
            <person name="Guan K.L."/>
            <person name="Xu Y."/>
        </authorList>
    </citation>
    <scope>X-RAY CRYSTALLOGRAPHY (2.8 ANGSTROMS) OF 50-171 IN COMPLEX WITH TEAD1</scope>
    <scope>COILED-COIL REGION</scope>
    <scope>INTERACTION WITH TEAD1</scope>
    <scope>MUTAGENESIS OF MET-86; ARG-89; LEU-91; SER-94; PHE-95 AND PHE-96</scope>
</reference>
<reference evidence="45 46 47" key="49">
    <citation type="journal article" date="2011" name="Genes Dev.">
        <title>A Smad action turnover switch operated by WW domain readers of a phosphoserine code.</title>
        <authorList>
            <person name="Aragon E."/>
            <person name="Goerner N."/>
            <person name="Zaromytidou A.I."/>
            <person name="Xi Q."/>
            <person name="Escobedo A."/>
            <person name="Massague J."/>
            <person name="Macias M.J."/>
        </authorList>
    </citation>
    <scope>STRUCTURE BY NMR OF 170-205</scope>
    <scope>INTERACTION WITH SMAD1</scope>
</reference>
<sequence length="504" mass="54462">MDPGQQPPPQPAPQGQGQPPSQPPQGQGPPSGPGQPAPAATQAAPQAPPAGHQIVHVRGDSETDLEALFNAVMNPKTANVPQTVPMRLRKLPDSFFKPPEPKSHSRQASTDAGTAGALTPQHVRAHSSPASLQLGAVSPGTLTPTGVVSGPAATPTAQHLRQSSFEIPDDVPLPAGWEMAKTSSGQRYFLNHIDQTTTWQDPRKAMLSQMNVTAPTSPPVQQNMMNSASGPLPDGWEQAMTQDGEIYYINHKNKTTSWLDPRLDPRFAMNQRISQSAPVKQPPPLAPQSPQGGVMGGSNSNQQQQMRLQQLQMEKERLRLKQQELLRQAMRNINPSTANSPKCQELALRSQLPTLEQDGGTQNPVSSPGMSQELRTMTTNSSDPFLNSGTYHSRDESTDSGLSMSSYSVPRTPDDFLNSVDEMDTGDTINQSTLPSQQNRFPDYLEAIPGTNVDLGTLEGDGMNIEGEELMPSLQEALSSDILNDMESVLAATKLDKESFLTWL</sequence>
<organism>
    <name type="scientific">Homo sapiens</name>
    <name type="common">Human</name>
    <dbReference type="NCBI Taxonomy" id="9606"/>
    <lineage>
        <taxon>Eukaryota</taxon>
        <taxon>Metazoa</taxon>
        <taxon>Chordata</taxon>
        <taxon>Craniata</taxon>
        <taxon>Vertebrata</taxon>
        <taxon>Euteleostomi</taxon>
        <taxon>Mammalia</taxon>
        <taxon>Eutheria</taxon>
        <taxon>Euarchontoglires</taxon>
        <taxon>Primates</taxon>
        <taxon>Haplorrhini</taxon>
        <taxon>Catarrhini</taxon>
        <taxon>Hominidae</taxon>
        <taxon>Homo</taxon>
    </lineage>
</organism>